<reference key="1">
    <citation type="journal article" date="1997" name="J. Gen. Virol.">
        <title>Molecular analysis of dengue virus attenuation after serial passage in primary dog kidney cells.</title>
        <authorList>
            <person name="Puri B."/>
            <person name="Nelson W.M."/>
            <person name="Henchal E.A."/>
            <person name="Hoke C.H."/>
            <person name="Eckels K.H."/>
            <person name="Dubois D.R."/>
            <person name="Porter K.R."/>
            <person name="Hayes C.G."/>
        </authorList>
    </citation>
    <scope>NUCLEOTIDE SEQUENCE [GENOMIC RNA]</scope>
    <source>
        <strain>Isolate 45AZ5</strain>
        <strain>Isolate WestPac</strain>
    </source>
</reference>
<reference key="2">
    <citation type="journal article" date="1987" name="Virology">
        <title>Sequence of the dengue-1 virus genome in the region encoding the three structural proteins and the major nonstructural protein NS1.</title>
        <authorList>
            <person name="Mason P.W."/>
            <person name="McAda P.C."/>
            <person name="Mason T.L."/>
            <person name="Fournier M.J."/>
        </authorList>
    </citation>
    <scope>NUCLEOTIDE SEQUENCE [GENOMIC RNA] OF 1-1226</scope>
</reference>
<reference key="3">
    <citation type="journal article" date="1989" name="J. Gen. Virol.">
        <title>Genetic relatedness among structural protein genes of dengue 1 virus strains.</title>
        <authorList>
            <person name="Chu M.C."/>
            <person name="O'Rourke E.J."/>
            <person name="Trent D.W."/>
        </authorList>
    </citation>
    <scope>NUCLEOTIDE SEQUENCE [GENOMIC RNA] OF 1-792</scope>
    <source>
        <strain>Isolate Philippines/836-1/1984</strain>
    </source>
</reference>
<reference key="4">
    <citation type="journal article" date="1988" name="Virology">
        <title>Evidence that the mature form of the flavivirus nonstructural protein NS1 is a dimer.</title>
        <authorList>
            <person name="Winkler G."/>
            <person name="Randolph V.B."/>
            <person name="Cleaves G.R."/>
            <person name="Ryan T.E."/>
            <person name="Stollar V."/>
        </authorList>
    </citation>
    <scope>SUBUNIT (NON-STRUCTURAL PROTEIN 1)</scope>
</reference>
<reference key="5">
    <citation type="journal article" date="1990" name="Virology">
        <title>Acidotropic amines inhibit proteolytic processing of flavivirus prM protein.</title>
        <authorList>
            <person name="Randolph V.B."/>
            <person name="Winkler G."/>
            <person name="Stollar V."/>
        </authorList>
    </citation>
    <scope>PROTEOLYTIC CLEAVAGE (PROTEIN PRM)</scope>
</reference>
<reference key="6">
    <citation type="journal article" date="1994" name="J. Gen. Virol.">
        <title>Glycosylation mutants of dengue virus NS1 protein.</title>
        <authorList>
            <person name="Pryor M.J."/>
            <person name="Wright P.J."/>
        </authorList>
    </citation>
    <scope>GLYCOSYLATION (NON-STRUCTURAL PROTEIN 1)</scope>
</reference>
<reference key="7">
    <citation type="journal article" date="1999" name="J. Virol.">
        <title>Dengue virus type 1 nonstructural glycoprotein NS1 is secreted from mammalian cells as a soluble hexamer in a glycosylation-dependent fashion.</title>
        <authorList>
            <person name="Flamand M."/>
            <person name="Megret F."/>
            <person name="Mathieu M."/>
            <person name="Lepault J."/>
            <person name="Rey F.A."/>
            <person name="Deubel V."/>
        </authorList>
    </citation>
    <scope>SUBCELLULAR LOCATION (NON-STRUCTURAL PROTEIN 1)</scope>
    <scope>SUBUNIT (NON-STRUCTURAL PROTEIN 1)</scope>
    <scope>GLYCOSYLATION (NON-STRUCTURAL PROTEIN 1)</scope>
</reference>
<reference key="8">
    <citation type="journal article" date="1995" name="J. Biol. Chem.">
        <title>Association between NS3 and NS5 proteins of dengue virus type 2 in the putative RNA replicase is linked to differential phosphorylation of NS5.</title>
        <authorList>
            <person name="Kapoor M."/>
            <person name="Zhang L."/>
            <person name="Ramachandra M."/>
            <person name="Kusukawa J."/>
            <person name="Ebner K.E."/>
            <person name="Padmanabhan R."/>
        </authorList>
    </citation>
    <scope>PHOSPHORYLATION (RNA-DIRECTED RNA POLYMERASE NS5)</scope>
</reference>
<reference key="9">
    <citation type="journal article" date="1999" name="J. Virol.">
        <title>PrM- and cell-binding domains of the dengue virus E protein.</title>
        <authorList>
            <person name="Wang S."/>
            <person name="He R."/>
            <person name="Anderson R."/>
        </authorList>
    </citation>
    <scope>FUNCTION (PROTEIN PRM)</scope>
    <scope>INTERACTION WITH ENVELOPE PROTEIN E (PROTEIN PRM)</scope>
    <scope>INTERACTION WITH PROTEIN PRM (ENVELOPE PROTEIN E)</scope>
</reference>
<reference key="10">
    <citation type="journal article" date="2003" name="J. Gen. Virol.">
        <title>Dengue virus M protein contains a proapoptotic sequence referred to as ApoptoM.</title>
        <authorList>
            <person name="Catteau A."/>
            <person name="Kalinina O."/>
            <person name="Wagner M.C."/>
            <person name="Deubel V."/>
            <person name="Courageot M.P."/>
            <person name="Despres P."/>
        </authorList>
    </citation>
    <scope>FUNCTION (SMALL ENVELOPE PROTEIN M)</scope>
</reference>
<reference key="11">
    <citation type="journal article" date="2007" name="J. Virol.">
        <title>Structure and function of flavivirus NS5 methyltransferase.</title>
        <authorList>
            <person name="Zhou Y."/>
            <person name="Ray D."/>
            <person name="Zhao Y."/>
            <person name="Dong H."/>
            <person name="Ren S."/>
            <person name="Li Z."/>
            <person name="Guo Y."/>
            <person name="Bernard K.A."/>
            <person name="Shi P.-Y."/>
            <person name="Li H."/>
        </authorList>
    </citation>
    <scope>CHARACTERIZATION OF METHYLTRANSFERASE ACTIVITY (RNA-DIRECTED RNA POLYMERASE NS5)</scope>
    <scope>FUNCTION (RNA-DIRECTED RNA POLYMERASE NS5)</scope>
</reference>
<reference key="12">
    <citation type="journal article" date="2002" name="Cell">
        <title>Structure of dengue virus: implications for flavivirus organization, maturation, and fusion.</title>
        <authorList>
            <person name="Kuhn R.J."/>
            <person name="Zhang W."/>
            <person name="Rossmann M.G."/>
            <person name="Pletnev S.V."/>
            <person name="Corver J."/>
            <person name="Lenches E."/>
            <person name="Jones C.T."/>
            <person name="Mukhopadhyay S."/>
            <person name="Chipman P.R."/>
            <person name="Strauss E.G."/>
            <person name="Baker T.S."/>
            <person name="Strauss J.H."/>
        </authorList>
    </citation>
    <scope>FUNCTION (CAPSID PROTEIN C)</scope>
    <scope>FUNCTION (ENVELOPE PROTEIN E)</scope>
    <scope>SUBUNIT (ENVELOPE PROTEIN E)</scope>
</reference>
<reference key="13">
    <citation type="journal article" date="2004" name="J. Biol. Chem.">
        <title>Determination of the disulfide bond arrangement of dengue virus NS1 protein.</title>
        <authorList>
            <person name="Wallis T.P."/>
            <person name="Huang C.Y."/>
            <person name="Nimkar S.B."/>
            <person name="Young P.R."/>
            <person name="Gorman J.J."/>
        </authorList>
    </citation>
    <scope>DISULFIDE BOND (NON-STRUCTURAL PROTEIN 1)</scope>
    <source>
        <strain>DENV-2 strain Puerto Rico/PR159-S1/1969</strain>
    </source>
</reference>
<reference key="14">
    <citation type="journal article" date="2004" name="J. Virol.">
        <title>Contribution of disulfide bridging to epitope expression of the dengue type 2 virus envelope glycoprotein.</title>
        <authorList>
            <person name="Roehrig J.T."/>
            <person name="Volpe K.E."/>
            <person name="Squires J."/>
            <person name="Hunt A.R."/>
            <person name="Davis B.S."/>
            <person name="Chang G.J."/>
        </authorList>
    </citation>
    <scope>DISULFIDE BOND (ENVELOPE PROTEIN E)</scope>
    <source>
        <strain>DENV-2 strain Thailand/16681/1984</strain>
    </source>
</reference>
<reference key="15">
    <citation type="journal article" date="2005" name="J. Virol.">
        <title>Inhibition of alpha/beta interferon signaling by the NS4B protein of flaviviruses.</title>
        <authorList>
            <person name="Munoz-Jordan J.L."/>
            <person name="Laurent-Rolle M."/>
            <person name="Ashour J."/>
            <person name="Martinez-Sobrido L."/>
            <person name="Ashok M."/>
            <person name="Lipkin W.I."/>
            <person name="Garcia-Sastre A."/>
        </authorList>
    </citation>
    <scope>FUNCTION (NON-STRUCTURAL PROTEIN 4B)</scope>
</reference>
<reference key="16">
    <citation type="journal article" date="2005" name="J. Membr. Biol.">
        <title>Dengue virus M protein C-terminal peptide (DVM-C) forms ion channels.</title>
        <authorList>
            <person name="Premkumar A."/>
            <person name="Horan C.R."/>
            <person name="Gage P.W."/>
        </authorList>
    </citation>
    <scope>FUNCTION (SMALL ENVELOPE PROTEIN M)</scope>
</reference>
<reference key="17">
    <citation type="journal article" date="2005" name="J. Biol. Chem.">
        <title>Modulation of the nucleoside triphosphatase/RNA helicase and 5'-RNA triphosphatase activities of Dengue virus type 2 nonstructural protein 3 (NS3) by interaction with NS5, the RNA-dependent RNA polymerase.</title>
        <authorList>
            <person name="Yon C."/>
            <person name="Teramoto T."/>
            <person name="Mueller N."/>
            <person name="Phelan J."/>
            <person name="Ganesh V.K."/>
            <person name="Murthy K.H."/>
            <person name="Padmanabhan R."/>
        </authorList>
    </citation>
    <scope>INTERACTION WITH SERINE PROTEASE NS3 (RNA-DIRECTED RNA POLYMERASE NS5)</scope>
    <scope>INTERACTION WITH RNA-DIRECTED RNA POLYMERASE NS5 (SERINE PROTEASE NS3)</scope>
    <scope>CATALYTIC ACTIVITY (SERINE PROTEASE NS3)</scope>
    <source>
        <strain>Thailand/NGS-C/1944</strain>
    </source>
</reference>
<reference key="18">
    <citation type="journal article" date="2006" name="J. Gen. Virol.">
        <title>Dengue virus NS4B interacts with NS3 and dissociates it from single-stranded RNA.</title>
        <authorList>
            <person name="Umareddy I."/>
            <person name="Chao A."/>
            <person name="Sampath A."/>
            <person name="Gu F."/>
            <person name="Vasudevan S.G."/>
        </authorList>
    </citation>
    <scope>INTERACTION WITH NON-STRUCTURAL PROTEIN 4B (NON-STRUCTURAL PROTEIN 3)</scope>
    <scope>INTERACTION WITH NON-STRUCTURAL PROTEIN 3 (NON-STRUCTURAL PROTEIN 4B)</scope>
</reference>
<reference key="19">
    <citation type="journal article" date="2006" name="J. Biol. Chem.">
        <title>Subcellular localization and membrane topology of the Dengue virus type 2 Non-structural protein 4B.</title>
        <authorList>
            <person name="Miller S."/>
            <person name="Sparacio S."/>
            <person name="Bartenschlager R."/>
        </authorList>
    </citation>
    <scope>SUBCELLULAR LOCATION (NON-STRUCTURAL PROTEIN 4B)</scope>
    <scope>TOPOLOGY (NON-STRUCTURAL PROTEIN 4B)</scope>
</reference>
<reference key="20">
    <citation type="journal article" date="2006" name="J. Virol.">
        <title>Nuclear localization of flavivirus RNA synthesis in infected cells.</title>
        <authorList>
            <person name="Uchil P.D."/>
            <person name="Kumar A.V."/>
            <person name="Satchidanandam V."/>
        </authorList>
    </citation>
    <scope>SUBCELLULAR LOCATION (RNA-DIRECTED RNA POLYMERASE NS5)</scope>
</reference>
<reference key="21">
    <citation type="journal article" date="2007" name="J. Biol. Chem.">
        <title>The non-structural protein 4A of dengue virus is an integral membrane protein inducing membrane alterations in a 2K-regulated manner.</title>
        <authorList>
            <person name="Miller S."/>
            <person name="Kastner S."/>
            <person name="Krijnse-Locker J."/>
            <person name="Buhler S."/>
            <person name="Bartenschlager R."/>
        </authorList>
    </citation>
    <scope>SUBCELLULAR LOCATION (NON-STRUCTURAL PROTEIN 4A)</scope>
    <scope>TOPOLOGY (PEPTIDE 2K)</scope>
</reference>
<reference key="22">
    <citation type="journal article" date="2007" name="J. Virol.">
        <title>Essential role of dengue virus envelope protein N glycosylation at asparagine-67 during viral propagation.</title>
        <authorList>
            <person name="Mondotte J.A."/>
            <person name="Lozach P.Y."/>
            <person name="Amara A."/>
            <person name="Gamarnik A.V."/>
        </authorList>
    </citation>
    <scope>GLYCOSYLATION AT ASN-347 (ENVELOPE PROTEIN E)</scope>
</reference>
<reference key="23">
    <citation type="journal article" date="2008" name="Curr. Opin. Microbiol.">
        <title>Structural proteomics of dengue virus.</title>
        <authorList>
            <person name="Perera R."/>
            <person name="Kuhn R.J."/>
        </authorList>
    </citation>
    <scope>REVIEW</scope>
</reference>
<reference key="24">
    <citation type="journal article" date="2008" name="J. Gen. Virol.">
        <title>Multiple regions in dengue virus capsid protein contribute to nuclear localization during virus infection.</title>
        <authorList>
            <person name="Sangiambut S."/>
            <person name="Keelapang P."/>
            <person name="Aaskov J."/>
            <person name="Puttikhunt C."/>
            <person name="Kasinrerk W."/>
            <person name="Malasit P."/>
            <person name="Sittisombut N."/>
        </authorList>
    </citation>
    <scope>SUBCELLULAR LOCATION (CAPSID PROTEIN C)</scope>
    <scope>FUNCTION (CAPSID PROTEIN C)</scope>
</reference>
<reference key="25">
    <citation type="journal article" date="2008" name="Science">
        <title>Structure of the immature dengue virus at low pH primes proteolytic maturation.</title>
        <authorList>
            <person name="Yu I.M."/>
            <person name="Zhang W."/>
            <person name="Holdaway H.A."/>
            <person name="Li L."/>
            <person name="Kostyuchenko V.A."/>
            <person name="Chipman P.R."/>
            <person name="Kuhn R.J."/>
            <person name="Rossmann M.G."/>
            <person name="Chen J."/>
        </authorList>
    </citation>
    <scope>FUNCTION (ENVELOPE PROTEIN E)</scope>
    <scope>FUNCTION (PROTEIN PRM)</scope>
    <scope>FUNCTION (PEPTIDE PR)</scope>
</reference>
<reference key="26">
    <citation type="journal article" date="2009" name="J. Virol.">
        <title>Association of the pr peptides with dengue virus at acidic pH blocks membrane fusion.</title>
        <authorList>
            <person name="Yu I.M."/>
            <person name="Holdaway H.A."/>
            <person name="Chipman P.R."/>
            <person name="Kuhn R.J."/>
            <person name="Rossmann M.G."/>
            <person name="Chen J."/>
        </authorList>
    </citation>
    <scope>FUNCTION (PROTEIN PR)</scope>
    <scope>SUBCELLULAR LOCATION (PROTEIN PR)</scope>
</reference>
<reference key="27">
    <citation type="journal article" date="2009" name="J. Virol.">
        <title>NS5 of dengue virus mediates STAT2 binding and degradation.</title>
        <authorList>
            <person name="Ashour J."/>
            <person name="Laurent-Rolle M."/>
            <person name="Shi P.Y."/>
            <person name="Garcia-Sastre A."/>
        </authorList>
    </citation>
    <scope>FUNCTION (RNA-DIRECTED RNA POLYMERASE NS5)</scope>
    <scope>INTERACTION WITH HUMAN STAT2 (RNA-DIRECTED RNA POLYMERASE NS5)</scope>
</reference>
<reference key="28">
    <citation type="journal article" date="2009" name="RNA">
        <title>The flavivirus NS5 protein is a true RNA guanylyltransferase that catalyzes a two-step reaction to form the RNA cap structure.</title>
        <authorList>
            <person name="Issur M."/>
            <person name="Geiss B.J."/>
            <person name="Bougie I."/>
            <person name="Picard-Jean F."/>
            <person name="Despins S."/>
            <person name="Mayette J."/>
            <person name="Hobdey S.E."/>
            <person name="Bisaillon M."/>
        </authorList>
    </citation>
    <scope>FUNCTION (RNA-DIRECTED RNA POLYMERASE NS5)</scope>
    <scope>INTERACTION WITH RNA-DIRECTED RNA POLYMERASE NS5 (SERINE PROTEASE NS3)</scope>
    <source>
        <strain>Thailand/16681/1984</strain>
    </source>
</reference>
<reference key="29">
    <citation type="journal article" date="2010" name="J. Virol.">
        <title>The length of and nonhydrophobic residues in the transmembrane domain of dengue virus envelope protein are critical for its retention and assembly in the endoplasmic reticulum.</title>
        <authorList>
            <person name="Hsieh S.C."/>
            <person name="Tsai W.Y."/>
            <person name="Wang W.K."/>
        </authorList>
    </citation>
    <scope>DOMAIN (ENVELOPE PROTEIN E)</scope>
</reference>
<reference key="30">
    <citation type="journal article" date="2010" name="Cell. Microbiol.">
        <title>Human Sec3 protein is a novel transcriptional and translational repressor of flavivirus.</title>
        <authorList>
            <person name="Bhuvanakantham R."/>
            <person name="Li J."/>
            <person name="Tan T.T."/>
            <person name="Ng M.L."/>
        </authorList>
    </citation>
    <scope>INTERACTION WITH HUMAN EXOC1 (CAPSID PROTEIN C)</scope>
    <scope>SUBCELLULAR LOCATION (CAPSID PROTEIN C)</scope>
    <source>
        <strain>DENV-2</strain>
    </source>
</reference>
<reference key="31">
    <citation type="journal article" date="2013" name="Cell. Microbiol.">
        <title>West Nile virus and dengue virus capsid protein negates the antiviral activity of human Sec3 protein through the proteasome pathway.</title>
        <authorList>
            <person name="Bhuvanakantham R."/>
            <person name="Ng M.L."/>
        </authorList>
    </citation>
    <scope>INTERACTION WITH HUMAN EXOC1 (CAPSID PROTEIN C)</scope>
    <scope>FUNCTION (CAPSID PROTEIN C)</scope>
    <source>
        <strain>DENV-2</strain>
    </source>
</reference>
<reference key="32">
    <citation type="journal article" date="2010" name="Cell. Mol. Life Sci.">
        <title>Dengue virus life cycle: viral and host factors modulating infectivity.</title>
        <authorList>
            <person name="Rodenhuis-Zybert I.A."/>
            <person name="Wilschut J."/>
            <person name="Smit J.M."/>
        </authorList>
    </citation>
    <scope>REVIEW</scope>
</reference>
<reference key="33">
    <citation type="journal article" date="2011" name="PLoS ONE">
        <title>Dengue virus capsid protein binds core histones and inhibits nucleosome formation in human liver cells.</title>
        <authorList>
            <person name="Colpitts T.M."/>
            <person name="Barthel S."/>
            <person name="Wang P."/>
            <person name="Fikrig E."/>
        </authorList>
    </citation>
    <scope>FUNCTION (CAPSID PROTEIN C)</scope>
</reference>
<reference key="34">
    <citation type="journal article" date="2011" name="Trends Microbiol.">
        <title>Partial maturation: an immune-evasion strategy of dengue virus?</title>
        <authorList>
            <person name="Rodenhuis-Zybert I.A."/>
            <person name="Wilschut J."/>
            <person name="Smit J.M."/>
        </authorList>
    </citation>
    <scope>REVIEW (PROTEIN PRM)</scope>
</reference>
<reference key="35">
    <citation type="journal article" date="2013" name="J. Virol.">
        <title>Membrane topology and function of dengue virus NS2A protein.</title>
        <authorList>
            <person name="Xie X."/>
            <person name="Gayen S."/>
            <person name="Kang C."/>
            <person name="Yuan Z."/>
            <person name="Shi P.Y."/>
        </authorList>
    </citation>
    <scope>SUBCELLULAR LOCATION (NON-STRUCTURAL PROTEIN 2A)</scope>
    <scope>TOPOLOGY (NON-STRUCTURAL PROTEIN 2A)</scope>
    <source>
        <strain>DENV-2 strain NGC</strain>
    </source>
</reference>
<reference key="36">
    <citation type="journal article" date="2014" name="J. Biol. Chem.">
        <title>Highly conserved residues in the helical domain of dengue virus type 1 precursor membrane protein are involved in assembly, precursor membrane (prM) protein cleavage, and entry.</title>
        <authorList>
            <person name="Hsieh S.C."/>
            <person name="Wu Y.C."/>
            <person name="Zou G."/>
            <person name="Nerurkar V.R."/>
            <person name="Shi P.Y."/>
            <person name="Wang W.K."/>
        </authorList>
    </citation>
    <scope>FUNCTION (SMALL ENVELOPE PROTEIN M)</scope>
    <scope>FUNCTION (PROTEIN PRM)</scope>
    <source>
        <strain>DENV-1 strain Hawaii</strain>
    </source>
</reference>
<reference key="37">
    <citation type="journal article" date="2015" name="PLoS Pathog.">
        <title>Dengue virus non-structural protein 1 modulates infectious particle production via interaction with the structural proteins.</title>
        <authorList>
            <person name="Scaturro P."/>
            <person name="Cortese M."/>
            <person name="Chatel-Chaix L."/>
            <person name="Fischl W."/>
            <person name="Bartenschlager R."/>
        </authorList>
    </citation>
    <scope>INTERACTION WITH ENVELOPE PROTEIN E (NON-STRUCTURAL PROTEIN 1)</scope>
    <scope>INTERACTION WITH PRM (NON-STRUCTURAL PROTEIN 1)</scope>
    <scope>INTERACTION WITH NON-STRUCTURAL PROTEIN 1 (PROTEIN PRM)</scope>
    <scope>INTERACTION WITH NON-STRUCTURAL PROTEIN 1 (ENVELOPE PROTEIN E)</scope>
    <source>
        <strain>DENV-2 strain 16681</strain>
    </source>
</reference>
<reference key="38">
    <citation type="journal article" date="2015" name="Virology">
        <title>The dengue virus non-structural protein 1 (NS1) is secreted efficiently from infected mosquito cells.</title>
        <authorList>
            <person name="Alcala A.C."/>
            <person name="Medina F."/>
            <person name="Gonzalez-Robles A."/>
            <person name="Salazar-Villatoro L."/>
            <person name="Fragoso-Soriano R.J."/>
            <person name="Vasquez C."/>
            <person name="Cervantes-Salazar M."/>
            <person name="Del Angel R.M."/>
            <person name="Ludert J.E."/>
        </authorList>
    </citation>
    <scope>SUBCELLULAR LOCATION (NON-STRUCTURAL PROTEIN 1)</scope>
</reference>
<reference key="39">
    <citation type="journal article" date="2015" name="J. Virol.">
        <title>Two distinct sets of NS2A molecules are responsible for dengue virus RNA synthesis and virion assembly.</title>
        <authorList>
            <person name="Xie X."/>
            <person name="Zou J."/>
            <person name="Puttikhunt C."/>
            <person name="Yuan Z."/>
            <person name="Shi P.Y."/>
        </authorList>
    </citation>
    <scope>FUNCTION (NON-STRUCTURAL PROTEIN 2A)</scope>
    <scope>MUTAGENESIS OF GLY-1138; GLU-1147; GLU-1227; ASP-1252; GLN-1314; LYS-1315 AND GLY-1327</scope>
</reference>
<reference key="40">
    <citation type="journal article" date="2015" name="Biochim. Biophys. Acta">
        <title>Membrane topology of NS2B of dengue virus revealed by NMR spectroscopy.</title>
        <authorList>
            <person name="Li Y."/>
            <person name="Li Q."/>
            <person name="Wong Y.L."/>
            <person name="Liew L.S."/>
            <person name="Kang C."/>
        </authorList>
    </citation>
    <scope>SUBCELLULAR LOCATION (SERINE PROTEASE SUBUNIT NS2B)</scope>
    <scope>TOPOLOGY (SERINE PROTEASE SUBUNIT NS2B)</scope>
    <source>
        <strain>DENV-4</strain>
    </source>
</reference>
<reference key="41">
    <citation type="journal article" date="2016" name="Virol. J.">
        <title>Recombinant Dengue virus protein NS2B alters membrane permeability in different membrane models.</title>
        <authorList>
            <person name="Leon-Juarez M."/>
            <person name="Martinez-Castillo M."/>
            <person name="Shrivastava G."/>
            <person name="Garcia-Cordero J."/>
            <person name="Villegas-Sepulveda N."/>
            <person name="Mondragon-Castelan M."/>
            <person name="Mondragon-Flores R."/>
            <person name="Cedillo-Barron L."/>
        </authorList>
    </citation>
    <scope>FUNCTION (SERINE PROTEASE SUBUNIT NS2B)</scope>
    <scope>SUBUNIT (SERINE PROTEASE SUBUNIT NS2B)</scope>
    <source>
        <strain>DENV-2 New Guinea strain AF0136</strain>
    </source>
</reference>
<reference key="42">
    <citation type="journal article" date="2016" name="PLoS Pathog.">
        <title>Dengue virus nonstructural protein 5 (NS5) assembles into a dimer with a unique methyltransferase and polymerase interface.</title>
        <authorList>
            <person name="Klema V.J."/>
            <person name="Ye M."/>
            <person name="Hindupur A."/>
            <person name="Teramoto T."/>
            <person name="Gottipati K."/>
            <person name="Padmanabhan R."/>
            <person name="Choi K.H."/>
        </authorList>
    </citation>
    <scope>SUBUNIT (RNA-DIRECTED RNA POLYMERASE NS5)</scope>
    <source>
        <strain>DENV-3</strain>
    </source>
</reference>
<reference key="43">
    <citation type="journal article" date="2016" name="PLoS Pathog.">
        <title>Dengue virus NS1 disrupts the endothelial glycocalyx, leading to hyperpermeability.</title>
        <authorList>
            <person name="Puerta-Guardo H."/>
            <person name="Glasner D.R."/>
            <person name="Harris E."/>
        </authorList>
    </citation>
    <scope>FUNCTION (NON-STRUCTURAL PROTEIN 1)</scope>
</reference>
<reference key="44">
    <citation type="journal article" date="2016" name="Virol. J.">
        <title>Flavivirus NS1: a multifaceted enigmatic viral protein.</title>
        <authorList>
            <person name="Rastogi M."/>
            <person name="Sharma N."/>
            <person name="Singh S.K."/>
        </authorList>
    </citation>
    <scope>REVIEW (NON-STRUCTURAL PROTEIN 1)</scope>
</reference>
<reference key="45">
    <citation type="journal article" date="2016" name="J. Virol.">
        <title>Dengue virus subverts host innate immunity by targeting adaptor protein MAVS.</title>
        <authorList>
            <person name="He Z."/>
            <person name="Zhu X."/>
            <person name="Wen W."/>
            <person name="Yuan J."/>
            <person name="Hu Y."/>
            <person name="Chen J."/>
            <person name="An S."/>
            <person name="Dong X."/>
            <person name="Lin C."/>
            <person name="Yu J."/>
            <person name="Wu J."/>
            <person name="Yang Y."/>
            <person name="Cai J."/>
            <person name="Li J."/>
            <person name="Li M."/>
        </authorList>
    </citation>
    <scope>FUNCTION</scope>
    <scope>INTERACTION WITH HOST MAVS</scope>
    <scope>SUBCELLULAR LOCATION</scope>
</reference>
<reference key="46">
    <citation type="journal article" date="2017" name="J. Virol.">
        <title>IRAV (FLJ11286), an Interferon-Stimulated Gene with Antiviral Activity against Dengue Virus, Interacts with MOV10.</title>
        <authorList>
            <person name="Balinsky C.A."/>
            <person name="Schmeisser H."/>
            <person name="Wells A.I."/>
            <person name="Ganesan S."/>
            <person name="Jin T."/>
            <person name="Singh K."/>
            <person name="Zoon K.C."/>
        </authorList>
    </citation>
    <scope>INTERACTION WITH HOST SHFL (SERINE PROTEASE NS3 AND NON-STRUCTURAL PROTEIN 4A)</scope>
    <source>
        <strain>Tonga/74 type 2</strain>
    </source>
</reference>
<reference key="47">
    <citation type="journal article" date="2017" name="Viruses">
        <title>Dengue virus non-structural protein 5.</title>
        <authorList>
            <person name="El Sahili A."/>
            <person name="Lescar J."/>
        </authorList>
    </citation>
    <scope>REVIEW (RNA-DIRECTED RNA POLYMERASE NS5)</scope>
</reference>
<reference key="48">
    <citation type="journal article" date="2010" name="J. Virol.">
        <title>Serotype-specific structural differences in the protease-cofactor complexes of the dengue virus family.</title>
        <authorList>
            <person name="Chandramouli S."/>
            <person name="Joseph J.S."/>
            <person name="Daudenarde S."/>
            <person name="Gatchalian J."/>
            <person name="Cornillez-Ty C."/>
            <person name="Kuhn P."/>
        </authorList>
    </citation>
    <scope>X-RAY CRYSTALLOGRAPHY (2.2 ANGSTROMS) OF 1394-1661</scope>
    <scope>INTERACTION WITH SERINE PROTEASE NS3 (SERINE PROTEASE SUBUNIT NS2B)</scope>
    <scope>INTERACTION WITH SERINE PROTEASE SUBUNIT NS2B (SERINE PROTEASE NS3)</scope>
</reference>
<organismHost>
    <name type="scientific">Aedes aegypti</name>
    <name type="common">Yellowfever mosquito</name>
    <name type="synonym">Culex aegypti</name>
    <dbReference type="NCBI Taxonomy" id="7159"/>
</organismHost>
<organismHost>
    <name type="scientific">Aedes albopictus</name>
    <name type="common">Asian tiger mosquito</name>
    <name type="synonym">Stegomyia albopicta</name>
    <dbReference type="NCBI Taxonomy" id="7160"/>
</organismHost>
<organismHost>
    <name type="scientific">Homo sapiens</name>
    <name type="common">Human</name>
    <dbReference type="NCBI Taxonomy" id="9606"/>
</organismHost>
<comment type="function">
    <molecule>Capsid protein C</molecule>
    <text evidence="19 33 42 44">Plays a role in virus budding by binding to the cell membrane and gathering the viral RNA into a nucleocapsid that forms the core of a mature virus particle (PubMed:11893341). During virus entry, may induce genome penetration into the host cytoplasm after hemifusion induced by the surface proteins. Can migrate to the cell nucleus where it modulates host functions (PubMed:18420804, PubMed:21909430). Overcomes the anti-viral effects of host EXOC1 by sequestering and degrading the latter through the proteasome degradation pathway (PubMed:23522008).</text>
</comment>
<comment type="function">
    <molecule>Capsid protein C</molecule>
    <text evidence="1">Inhibits RNA silencing by interfering with host Dicer.</text>
</comment>
<comment type="function">
    <molecule>Peptide pr</molecule>
    <text evidence="32 35">Prevents premature fusion activity of envelope proteins in trans-Golgi by binding to envelope protein E at pH6.0. After virion release in extracellular space, gets dissociated from E dimers.</text>
</comment>
<comment type="function">
    <molecule>Protein prM</molecule>
    <text evidence="32 45 58 59">Acts as a chaperone for envelope protein E during intracellular virion assembly by masking and inactivating envelope protein E fusion peptide. prM is the only viral peptide matured by host furin in the trans-Golgi network probably to avoid catastrophic activation of the viral fusion activity in acidic Golgi compartment prior to virion release (PubMed:9971841). prM-E cleavage is inefficient, and many virions are only partially matured. These uncleaved prM would play a role in immune evasion (PubMed:21388812).</text>
</comment>
<comment type="function">
    <molecule>Small envelope protein M</molecule>
    <text evidence="20 25 45">May play a role in virus budding (PubMed:25326389). Exerts cytotoxic effects by activating a mitochondrial apoptotic pathway through M extodomain (PubMed:13679613). May display a viroporin activity (PubMed:16007501).</text>
</comment>
<comment type="function">
    <molecule>Envelope protein E</molecule>
    <text evidence="19 32">Binds to host cell surface receptor and mediates fusion between viral and cellular membranes. Envelope protein is synthesized in the endoplasmic reticulum in the form of heterodimer with protein prM. They play a role in virion budding in the ER, and the newly formed immature particle is covered with 60 spikes composed of heterodimer between precursor prM and envelope protein E. The virion is transported to the Golgi apparatus where the low pH causes dissociation of PrM-E heterodimers and formation of E homodimers (PubMed:18369148). prM-E cleavage is ineficient, and many virions are only partially matured. These uncleaved prM would play a role in immune evasion (PubMed:11893341).</text>
</comment>
<comment type="function">
    <molecule>Non-structural protein 1</molecule>
    <text evidence="9">Involved in immune evasion, pathogenesis and viral replication. Once cleaved off the polyprotein, is targeted to three destinations: the viral replication cycle, the plasma membrane and the extracellular compartment. Essential for viral replication. Required for formation of the replication complex and recruitment of other non-structural proteins to the ER-derived membrane structures. Excreted as a hexameric lipoparticle that plays a role against host immune response. Antagonizing the complement function. Binds to the host macrophages and dendritic cells. Inhibits signal transduction originating from Toll-like receptor 3 (TLR3).</text>
</comment>
<comment type="function">
    <molecule>Non-structural protein 1</molecule>
    <text evidence="53">Disrupts the host endothelial glycocalyx layer of host pulmonary microvascular endothelial cells, inducing degradation of sialic acid and shedding of heparan sulfate proteoglycans. NS1 induces expression of sialidases, heparanase, and activates cathepsin L, which activates heparanase via enzymatic cleavage. These effects are probably linked to the endothelial hyperpermeability observed in severe dengue disease.</text>
</comment>
<comment type="function">
    <molecule>Non-structural protein 2A</molecule>
    <text evidence="46">Component of the viral RNA replication complex that functions in virion assembly and antagonizes the host immune response.</text>
</comment>
<comment type="function">
    <molecule>Serine protease subunit NS2B</molecule>
    <text evidence="15 50">Required cofactor for the serine protease function of NS3. May have membrane-destabilizing activity and form viroporins (PubMed:26728778).</text>
</comment>
<comment type="function">
    <molecule>Serine protease NS3</molecule>
    <text evidence="16">Displays three enzymatic activities: serine protease, NTPase and RNA helicase. NS3 serine protease, in association with NS2B, performs its autocleavage and cleaves the polyprotein at dibasic sites in the cytoplasm: C-prM, NS2A-NS2B, NS2B-NS3, NS3-NS4A, NS4A-2K and NS4B-NS5. NS3 RNA helicase binds RNA and unwinds dsRNA in the 3' to 5' direction.</text>
</comment>
<comment type="function">
    <molecule>Non-structural protein 4A</molecule>
    <text evidence="6 9 52">Regulates the ATPase activity of the NS3 helicase activity. NS4A allows NS3 helicase to conserve energy during unwinding. Plays a role in the inhibition of the host innate immune response. Interacts with host MAVS and thereby prevents the interaction between RIGI and MAVS. In turn, IFN-beta production is impaired. Interacts with host AUP1 which mediates induction of lipophagy in host cells and facilitates production of virus progeny particles (By similarity).</text>
</comment>
<comment type="function">
    <molecule>Peptide 2k</molecule>
    <text evidence="30">Functions as a signal peptide for NS4B and is required for the interferon antagonism activity of the latter.</text>
</comment>
<comment type="function">
    <molecule>Non-structural protein 4B</molecule>
    <text evidence="9 24">Induces the formation of ER-derived membrane vesicles where the viral replication takes place (By similarity). Inhibits interferon (IFN)-induced host STAT1 phosphorylation and nuclear translocation, thereby preventing the establishment of a cellular antiviral state by blocking the IFN-alpha/beta pathway (PubMed:15956546).</text>
</comment>
<comment type="function">
    <molecule>RNA-directed RNA polymerase NS5</molecule>
    <text evidence="29 34 36">Replicates the viral (+) and (-) RNA genome, and performs the capping of genomes in the cytoplasm. NS5 methylates viral RNA cap at guanine N-7 and ribose 2'-O positions. Besides its role in RNA genome replication, also prevents the establishment of cellular antiviral state by blocking the interferon-alpha/beta (IFN-alpha/beta) signaling pathway. Inhibits host TYK2 and STAT2 phosphorylation, thereby preventing activation of JAK-STAT signaling pathway.</text>
</comment>
<comment type="catalytic activity">
    <reaction evidence="23">
        <text>Selective hydrolysis of -Xaa-Xaa-|-Yaa- bonds in which each of the Xaa can be either Arg or Lys and Yaa can be either Ser or Ala.</text>
        <dbReference type="EC" id="3.4.21.91"/>
    </reaction>
</comment>
<comment type="catalytic activity">
    <reaction evidence="12">
        <text>RNA(n) + a ribonucleoside 5'-triphosphate = RNA(n+1) + diphosphate</text>
        <dbReference type="Rhea" id="RHEA:21248"/>
        <dbReference type="Rhea" id="RHEA-COMP:14527"/>
        <dbReference type="Rhea" id="RHEA-COMP:17342"/>
        <dbReference type="ChEBI" id="CHEBI:33019"/>
        <dbReference type="ChEBI" id="CHEBI:61557"/>
        <dbReference type="ChEBI" id="CHEBI:140395"/>
        <dbReference type="EC" id="2.7.7.48"/>
    </reaction>
</comment>
<comment type="catalytic activity">
    <reaction>
        <text>a ribonucleoside 5'-triphosphate + H2O = a ribonucleoside 5'-diphosphate + phosphate + H(+)</text>
        <dbReference type="Rhea" id="RHEA:23680"/>
        <dbReference type="ChEBI" id="CHEBI:15377"/>
        <dbReference type="ChEBI" id="CHEBI:15378"/>
        <dbReference type="ChEBI" id="CHEBI:43474"/>
        <dbReference type="ChEBI" id="CHEBI:57930"/>
        <dbReference type="ChEBI" id="CHEBI:61557"/>
        <dbReference type="EC" id="3.6.1.15"/>
    </reaction>
</comment>
<comment type="catalytic activity">
    <reaction>
        <text>ATP + H2O = ADP + phosphate + H(+)</text>
        <dbReference type="Rhea" id="RHEA:13065"/>
        <dbReference type="ChEBI" id="CHEBI:15377"/>
        <dbReference type="ChEBI" id="CHEBI:15378"/>
        <dbReference type="ChEBI" id="CHEBI:30616"/>
        <dbReference type="ChEBI" id="CHEBI:43474"/>
        <dbReference type="ChEBI" id="CHEBI:456216"/>
        <dbReference type="EC" id="3.6.4.13"/>
    </reaction>
</comment>
<comment type="catalytic activity">
    <reaction evidence="17">
        <text>a 5'-end (5'-triphosphoguanosine)-ribonucleoside in mRNA + S-adenosyl-L-methionine = a 5'-end (N(7)-methyl 5'-triphosphoguanosine)-ribonucleoside in mRNA + S-adenosyl-L-homocysteine</text>
        <dbReference type="Rhea" id="RHEA:67008"/>
        <dbReference type="Rhea" id="RHEA-COMP:17166"/>
        <dbReference type="Rhea" id="RHEA-COMP:17167"/>
        <dbReference type="ChEBI" id="CHEBI:57856"/>
        <dbReference type="ChEBI" id="CHEBI:59789"/>
        <dbReference type="ChEBI" id="CHEBI:156461"/>
        <dbReference type="ChEBI" id="CHEBI:167617"/>
        <dbReference type="EC" id="2.1.1.56"/>
    </reaction>
</comment>
<comment type="catalytic activity">
    <reaction evidence="17">
        <text>a 5'-end (N(7)-methyl 5'-triphosphoguanosine)-ribonucleoside in mRNA + S-adenosyl-L-methionine = a 5'-end (N(7)-methyl 5'-triphosphoguanosine)-(2'-O-methyl-ribonucleoside) in mRNA + S-adenosyl-L-homocysteine + H(+)</text>
        <dbReference type="Rhea" id="RHEA:67020"/>
        <dbReference type="Rhea" id="RHEA-COMP:17167"/>
        <dbReference type="Rhea" id="RHEA-COMP:17168"/>
        <dbReference type="ChEBI" id="CHEBI:15378"/>
        <dbReference type="ChEBI" id="CHEBI:57856"/>
        <dbReference type="ChEBI" id="CHEBI:59789"/>
        <dbReference type="ChEBI" id="CHEBI:156461"/>
        <dbReference type="ChEBI" id="CHEBI:167609"/>
        <dbReference type="EC" id="2.1.1.57"/>
    </reaction>
</comment>
<comment type="subunit">
    <molecule>Capsid protein C</molecule>
    <text evidence="37 44">Homodimer. Interacts (via N-terminus) with host EXOC1 (via C-terminus) (PubMed:19889084, PubMed:23522008); this interaction results in EXOC1 degradation through the proteasome degradation pathway (PubMed:23522008).</text>
</comment>
<comment type="subunit">
    <molecule>Protein prM</molecule>
    <text evidence="58">Forms heterodimers with envelope protein E in the endoplasmic reticulum and Golgi (PubMed:9971841).</text>
</comment>
<comment type="subunit">
    <molecule>Envelope protein E</molecule>
    <text evidence="19 48 58">Homodimer; in the endoplasmic reticulum and Golgi (PubMed:11893341). Interacts with protein prM (PubMed:9971841). Interacts with non-structural protein 1 (PubMed:26562291).</text>
</comment>
<comment type="subunit">
    <molecule>Non-structural protein 1</molecule>
    <text evidence="18 48 55">Homodimer; Homohexamer when secreted (PubMed:10364366, PubMed:2827377). Interacts with envelope protein E (PubMed:26562291).</text>
</comment>
<comment type="subunit">
    <molecule>Non-structural protein 2A</molecule>
    <text evidence="1">Interacts (via N-terminus) with serine protease NS3.</text>
</comment>
<comment type="subunit">
    <molecule>Serine protease subunit NS2B</molecule>
    <text evidence="38 50">Forms a heterodimer with serine protease NS3 (PubMed:20042502). May form homooligomers (PubMed:26728778).</text>
</comment>
<comment type="subunit">
    <molecule>Serine protease NS3</molecule>
    <text evidence="23 28 36 38 54">Forms a heterodimer with NS2B (PubMed:20042502). Interacts with NS4B (PubMed:16894199). Interacts with unphosphorylated RNA-directed RNA polymerase NS5; this interaction stimulates RNA-directed RNA polymerase NS5 guanylyltransferase activity (PubMed:15917225, PubMed:19850911). Interacts with host SHFL (PubMed:27974568).</text>
</comment>
<comment type="subunit">
    <molecule>Non-structural protein 4A</molecule>
    <text evidence="6 52 54">Interacts with host MAVS; this interaction inhibits the synthesis of IFN-beta (PubMed:27252539). Interacts with host SHFL (PubMed:27974568). Interacts with host AUP1; the interaction occurs in the presence of Dengue virus NS4B and induces lipophagy which facilitates production of virus progeny particles (By similarity).</text>
</comment>
<comment type="subunit">
    <molecule>Non-structural protein 4B</molecule>
    <text evidence="28">Interacts with serine protease NS3 (PubMed:16894199).</text>
</comment>
<comment type="subunit">
    <molecule>RNA-directed RNA polymerase NS5</molecule>
    <text evidence="23 34 36 51">Homodimer (PubMed:26895240). Interacts with host STAT2; this interaction inhibits the phosphorylation of the latter, and, when all viral proteins are present (polyprotein), targets STAT2 for degradation (PubMed:19279106). Interacts with serine protease NS3 (PubMed:15917225, PubMed:19850911).</text>
</comment>
<comment type="subcellular location">
    <molecule>Capsid protein C</molecule>
    <subcellularLocation>
        <location>Virion</location>
    </subcellularLocation>
    <subcellularLocation>
        <location evidence="33">Host nucleus</location>
    </subcellularLocation>
    <subcellularLocation>
        <location evidence="37">Host cytoplasm</location>
    </subcellularLocation>
    <subcellularLocation>
        <location evidence="37">Host cytoplasm</location>
        <location evidence="37">Host perinuclear region</location>
    </subcellularLocation>
</comment>
<comment type="subcellular location">
    <molecule>Peptide pr</molecule>
    <subcellularLocation>
        <location evidence="35">Secreted</location>
    </subcellularLocation>
</comment>
<comment type="subcellular location">
    <molecule>Small envelope protein M</molecule>
    <subcellularLocation>
        <location evidence="58">Virion membrane</location>
        <topology evidence="10">Multi-pass membrane protein</topology>
    </subcellularLocation>
    <subcellularLocation>
        <location evidence="58">Host endoplasmic reticulum membrane</location>
        <topology evidence="10">Multi-pass membrane protein</topology>
    </subcellularLocation>
</comment>
<comment type="subcellular location">
    <molecule>Envelope protein E</molecule>
    <subcellularLocation>
        <location evidence="39">Virion membrane</location>
        <topology evidence="10">Multi-pass membrane protein</topology>
    </subcellularLocation>
    <subcellularLocation>
        <location evidence="39">Host endoplasmic reticulum membrane</location>
        <topology evidence="10">Multi-pass membrane protein</topology>
    </subcellularLocation>
</comment>
<comment type="subcellular location">
    <molecule>Non-structural protein 1</molecule>
    <subcellularLocation>
        <location evidence="18 49">Secreted</location>
    </subcellularLocation>
    <subcellularLocation>
        <location>Host endoplasmic reticulum membrane</location>
        <topology>Peripheral membrane protein</topology>
        <orientation evidence="62">Lumenal side</orientation>
    </subcellularLocation>
    <text evidence="9">Located in RE-derived vesicles hosting the replication complex.</text>
</comment>
<comment type="subcellular location">
    <molecule>Non-structural protein 2A</molecule>
    <subcellularLocation>
        <location evidence="43">Host endoplasmic reticulum membrane</location>
        <topology evidence="43">Multi-pass membrane protein</topology>
    </subcellularLocation>
</comment>
<comment type="subcellular location">
    <molecule>Serine protease subunit NS2B</molecule>
    <subcellularLocation>
        <location>Host endoplasmic reticulum membrane</location>
        <topology evidence="47">Multi-pass membrane protein</topology>
    </subcellularLocation>
</comment>
<comment type="subcellular location">
    <molecule>Serine protease NS3</molecule>
    <subcellularLocation>
        <location evidence="16">Host endoplasmic reticulum membrane</location>
        <topology evidence="16">Peripheral membrane protein</topology>
        <orientation evidence="16">Cytoplasmic side</orientation>
    </subcellularLocation>
    <text evidence="16">Remains non-covalently associated to serine protease subunit NS2B.</text>
</comment>
<comment type="subcellular location">
    <molecule>Non-structural protein 4A</molecule>
    <subcellularLocation>
        <location evidence="30">Host endoplasmic reticulum membrane</location>
        <topology evidence="30">Multi-pass membrane protein</topology>
    </subcellularLocation>
    <subcellularLocation>
        <location evidence="52">Host mitochondrion</location>
    </subcellularLocation>
    <text evidence="30 52">Located in RE-associated vesicles hosting the replication complex. Interacts with host MAVS in the mitochondrion-associated endoplasmic reticulum membranes.</text>
</comment>
<comment type="subcellular location">
    <molecule>Non-structural protein 4B</molecule>
    <subcellularLocation>
        <location evidence="26">Host endoplasmic reticulum membrane</location>
        <topology evidence="26">Multi-pass membrane protein</topology>
    </subcellularLocation>
    <text evidence="9">Located in RE-derived vesicles hosting the replication complex.</text>
</comment>
<comment type="subcellular location">
    <molecule>RNA-directed RNA polymerase NS5</molecule>
    <subcellularLocation>
        <location evidence="62">Host endoplasmic reticulum membrane</location>
        <topology evidence="62">Peripheral membrane protein</topology>
        <orientation evidence="62">Cytoplasmic side</orientation>
    </subcellularLocation>
    <subcellularLocation>
        <location evidence="27">Host nucleus</location>
    </subcellularLocation>
    <text evidence="61">Located in RE-associated vesicles hosting the replication complex. NS5 protein is mainly localized in the nucleus rather than in ER vesicles, especially in the DENV 2, 3, 4 serotypes.</text>
</comment>
<comment type="domain">
    <text evidence="39">The transmembrane domains of the small envelope protein M and envelope protein E contain an endoplasmic reticulum retention signal.</text>
</comment>
<comment type="PTM">
    <molecule>RNA-directed RNA polymerase NS5</molecule>
    <text evidence="5">Sumoylation of RNA-directed RNA polymerase NS5 increases NS5 protein stability allowing proper viral RNA replication.</text>
</comment>
<comment type="PTM">
    <molecule>Genome polyprotein</molecule>
    <text>Specific enzymatic cleavages in vivo yield mature proteins. Cleavages in the lumen of endoplasmic reticulum are performed by host signal peptidase, whereas cleavages in the cytoplasmic side are performed by the Serine protease NS3. Signal cleavage at the 2K-4B site requires a prior NS3 protease-mediated cleavage at the 4A-2K site.</text>
</comment>
<comment type="PTM">
    <molecule>Protein prM</molecule>
    <text evidence="40 41">Cleaved in post-Golgi vesicles by a host furin, releasing the mature small envelope protein M, and peptide pr. This cleavage is incomplete as up to 30% of viral particles still carry uncleaved prM.</text>
</comment>
<comment type="PTM">
    <molecule>Non-structural protein 1</molecule>
    <text evidence="18 57">N-glycosylated (PubMed:10364366, PubMed:8176380). The excreted form is glycosylated and this is required for efficient secretion of the protein from infected cells.</text>
</comment>
<comment type="PTM">
    <molecule>Serine protease NS3</molecule>
    <text evidence="7">Acetylated by host KAT5. Acetylation modulates NS3 RNA-binding and unwinding activities and plays an important positive role for viral replication.</text>
</comment>
<comment type="PTM">
    <molecule>RNA-directed RNA polymerase NS5</molecule>
    <text evidence="56">Phosphorylated on serines residues. This phosphorylation may trigger NS5 nuclear localization.</text>
</comment>
<comment type="PTM">
    <molecule>Envelope protein E</molecule>
    <text evidence="31">N-glycosylated.</text>
</comment>
<comment type="similarity">
    <text evidence="17">In the N-terminal section; belongs to the class I-like SAM-binding methyltransferase superfamily. mRNA cap 0-1 NS5-type methyltransferase family.</text>
</comment>
<organism>
    <name type="scientific">Dengue virus type 1 (strain Nauru/West Pac/1974)</name>
    <name type="common">DENV-1</name>
    <dbReference type="NCBI Taxonomy" id="11059"/>
    <lineage>
        <taxon>Viruses</taxon>
        <taxon>Riboviria</taxon>
        <taxon>Orthornavirae</taxon>
        <taxon>Kitrinoviricota</taxon>
        <taxon>Flasuviricetes</taxon>
        <taxon>Amarillovirales</taxon>
        <taxon>Flaviviridae</taxon>
        <taxon>Orthoflavivirus</taxon>
        <taxon>Orthoflavivirus denguei</taxon>
        <taxon>Dengue virus</taxon>
    </lineage>
</organism>
<protein>
    <recommendedName>
        <fullName>Genome polyprotein</fullName>
    </recommendedName>
    <component>
        <recommendedName>
            <fullName>Capsid protein C</fullName>
        </recommendedName>
        <alternativeName>
            <fullName>Capsid protein</fullName>
        </alternativeName>
        <alternativeName>
            <fullName>Core protein</fullName>
        </alternativeName>
    </component>
    <component>
        <recommendedName>
            <fullName>Protein prM</fullName>
        </recommendedName>
        <alternativeName>
            <fullName>Precursor membrane protein</fullName>
        </alternativeName>
    </component>
    <component>
        <recommendedName>
            <fullName>Peptide pr</fullName>
        </recommendedName>
        <alternativeName>
            <fullName>Peptide precursor</fullName>
        </alternativeName>
    </component>
    <component>
        <recommendedName>
            <fullName>Small envelope protein M</fullName>
        </recommendedName>
        <alternativeName>
            <fullName>Matrix protein</fullName>
        </alternativeName>
    </component>
    <component>
        <recommendedName>
            <fullName>Envelope protein E</fullName>
        </recommendedName>
    </component>
    <component>
        <recommendedName>
            <fullName>Non-structural protein 1</fullName>
            <shortName>NS1</shortName>
        </recommendedName>
    </component>
    <component>
        <recommendedName>
            <fullName>Non-structural protein 2A</fullName>
            <shortName>NS2A</shortName>
        </recommendedName>
    </component>
    <component>
        <recommendedName>
            <fullName>Serine protease subunit NS2B</fullName>
        </recommendedName>
        <alternativeName>
            <fullName>Flavivirin protease NS2B regulatory subunit</fullName>
        </alternativeName>
        <alternativeName>
            <fullName>Non-structural protein 2B</fullName>
        </alternativeName>
    </component>
    <component>
        <recommendedName>
            <fullName>Serine protease NS3</fullName>
            <ecNumber>3.4.21.91</ecNumber>
            <ecNumber evidence="9">3.6.1.15</ecNumber>
            <ecNumber evidence="9">3.6.4.13</ecNumber>
        </recommendedName>
        <alternativeName>
            <fullName>Flavivirin protease NS3 catalytic subunit</fullName>
        </alternativeName>
        <alternativeName>
            <fullName>Non-structural protein 3</fullName>
        </alternativeName>
    </component>
    <component>
        <recommendedName>
            <fullName>Non-structural protein 4A</fullName>
            <shortName>NS4A</shortName>
        </recommendedName>
    </component>
    <component>
        <recommendedName>
            <fullName>Peptide 2k</fullName>
        </recommendedName>
    </component>
    <component>
        <recommendedName>
            <fullName>Non-structural protein 4B</fullName>
            <shortName>NS4B</shortName>
        </recommendedName>
    </component>
    <component>
        <recommendedName>
            <fullName>RNA-directed RNA polymerase NS5</fullName>
            <ecNumber evidence="17">2.1.1.56</ecNumber>
            <ecNumber evidence="17">2.1.1.57</ecNumber>
            <ecNumber evidence="12">2.7.7.48</ecNumber>
        </recommendedName>
        <alternativeName>
            <fullName>Non-structural protein 5</fullName>
        </alternativeName>
    </component>
</protein>
<proteinExistence type="evidence at protein level"/>
<dbReference type="EC" id="3.4.21.91"/>
<dbReference type="EC" id="3.6.1.15" evidence="9"/>
<dbReference type="EC" id="3.6.4.13" evidence="9"/>
<dbReference type="EC" id="2.1.1.56" evidence="17"/>
<dbReference type="EC" id="2.1.1.57" evidence="17"/>
<dbReference type="EC" id="2.7.7.48" evidence="12"/>
<dbReference type="EMBL" id="U88535">
    <property type="protein sequence ID" value="AAB70694.1"/>
    <property type="molecule type" value="Genomic_RNA"/>
</dbReference>
<dbReference type="EMBL" id="U88536">
    <property type="protein sequence ID" value="AAB70695.1"/>
    <property type="molecule type" value="Genomic_RNA"/>
</dbReference>
<dbReference type="EMBL" id="M23027">
    <property type="protein sequence ID" value="AAA42940.1"/>
    <property type="molecule type" value="Genomic_RNA"/>
</dbReference>
<dbReference type="EMBL" id="D00503">
    <property type="protein sequence ID" value="BAA00395.1"/>
    <property type="molecule type" value="Genomic_RNA"/>
</dbReference>
<dbReference type="PIR" id="A27032">
    <property type="entry name" value="GNWVWP"/>
</dbReference>
<dbReference type="RefSeq" id="NP_059433.1">
    <property type="nucleotide sequence ID" value="NC_001477.1"/>
</dbReference>
<dbReference type="PDB" id="3J8D">
    <property type="method" value="EM"/>
    <property type="resolution" value="26.00 A"/>
    <property type="chains" value="B/F=579-675"/>
</dbReference>
<dbReference type="PDB" id="3L6P">
    <property type="method" value="X-ray"/>
    <property type="resolution" value="2.20 A"/>
    <property type="chains" value="A=1476-1648"/>
</dbReference>
<dbReference type="PDB" id="3LKW">
    <property type="method" value="X-ray"/>
    <property type="resolution" value="2.00 A"/>
    <property type="chains" value="A=1476-1657"/>
</dbReference>
<dbReference type="PDB" id="4AL8">
    <property type="method" value="X-ray"/>
    <property type="resolution" value="1.66 A"/>
    <property type="chains" value="C=575-675"/>
</dbReference>
<dbReference type="PDB" id="4GSX">
    <property type="method" value="X-ray"/>
    <property type="resolution" value="1.90 A"/>
    <property type="chains" value="A/B=281-691"/>
</dbReference>
<dbReference type="PDB" id="4GT0">
    <property type="method" value="X-ray"/>
    <property type="resolution" value="2.57 A"/>
    <property type="chains" value="A/B=281-701"/>
</dbReference>
<dbReference type="PDB" id="4LCY">
    <property type="method" value="X-ray"/>
    <property type="resolution" value="1.60 A"/>
    <property type="chains" value="C/J=1741-1749"/>
</dbReference>
<dbReference type="PDB" id="4OIG">
    <property type="method" value="X-ray"/>
    <property type="resolution" value="2.69 A"/>
    <property type="chains" value="A/B/D/E=947-1127"/>
</dbReference>
<dbReference type="PDB" id="5VIC">
    <property type="method" value="X-ray"/>
    <property type="resolution" value="3.00 A"/>
    <property type="chains" value="E=578-676"/>
</dbReference>
<dbReference type="PDB" id="5WJL">
    <property type="method" value="X-ray"/>
    <property type="resolution" value="3.15 A"/>
    <property type="chains" value="C/F/I=1608-1617"/>
</dbReference>
<dbReference type="PDB" id="5WKF">
    <property type="method" value="X-ray"/>
    <property type="resolution" value="2.95 A"/>
    <property type="chains" value="C/H=1608-1617"/>
</dbReference>
<dbReference type="PDB" id="7DWT">
    <property type="method" value="EM"/>
    <property type="resolution" value="19.00 A"/>
    <property type="chains" value="A/B/C=281-775"/>
</dbReference>
<dbReference type="PDB" id="7DWU">
    <property type="method" value="EM"/>
    <property type="resolution" value="19.00 A"/>
    <property type="chains" value="A/B/C=281-775"/>
</dbReference>
<dbReference type="PDB" id="8VPR">
    <property type="method" value="X-ray"/>
    <property type="resolution" value="2.70 A"/>
    <property type="chains" value="B=2875-2890"/>
</dbReference>
<dbReference type="PDBsum" id="3J8D"/>
<dbReference type="PDBsum" id="3L6P"/>
<dbReference type="PDBsum" id="3LKW"/>
<dbReference type="PDBsum" id="4AL8"/>
<dbReference type="PDBsum" id="4GSX"/>
<dbReference type="PDBsum" id="4GT0"/>
<dbReference type="PDBsum" id="4LCY"/>
<dbReference type="PDBsum" id="4OIG"/>
<dbReference type="PDBsum" id="5VIC"/>
<dbReference type="PDBsum" id="5WJL"/>
<dbReference type="PDBsum" id="5WKF"/>
<dbReference type="PDBsum" id="7DWT"/>
<dbReference type="PDBsum" id="7DWU"/>
<dbReference type="PDBsum" id="8VPR"/>
<dbReference type="EMDB" id="EMD-30883"/>
<dbReference type="EMDB" id="EMD-30884"/>
<dbReference type="SMR" id="P17763"/>
<dbReference type="IntAct" id="P17763">
    <property type="interactions" value="1"/>
</dbReference>
<dbReference type="BindingDB" id="P17763"/>
<dbReference type="MEROPS" id="S07.001"/>
<dbReference type="ABCD" id="P17763">
    <property type="antibodies" value="21 sequenced antibodies"/>
</dbReference>
<dbReference type="GeneID" id="5075725"/>
<dbReference type="KEGG" id="vg:5075725"/>
<dbReference type="BRENDA" id="3.4.21.91">
    <property type="organism ID" value="9643"/>
</dbReference>
<dbReference type="EvolutionaryTrace" id="P17763"/>
<dbReference type="PRO" id="PR:P17763"/>
<dbReference type="Proteomes" id="UP000002500">
    <property type="component" value="Segment"/>
</dbReference>
<dbReference type="Proteomes" id="UP000180524">
    <property type="component" value="Genome"/>
</dbReference>
<dbReference type="GO" id="GO:0005576">
    <property type="term" value="C:extracellular region"/>
    <property type="evidence" value="ECO:0007669"/>
    <property type="project" value="UniProtKB-SubCell"/>
</dbReference>
<dbReference type="GO" id="GO:0044167">
    <property type="term" value="C:host cell endoplasmic reticulum membrane"/>
    <property type="evidence" value="ECO:0007669"/>
    <property type="project" value="UniProtKB-SubCell"/>
</dbReference>
<dbReference type="GO" id="GO:0033650">
    <property type="term" value="C:host cell mitochondrion"/>
    <property type="evidence" value="ECO:0007669"/>
    <property type="project" value="UniProtKB-SubCell"/>
</dbReference>
<dbReference type="GO" id="GO:0042025">
    <property type="term" value="C:host cell nucleus"/>
    <property type="evidence" value="ECO:0007669"/>
    <property type="project" value="UniProtKB-SubCell"/>
</dbReference>
<dbReference type="GO" id="GO:0044220">
    <property type="term" value="C:host cell perinuclear region of cytoplasm"/>
    <property type="evidence" value="ECO:0007669"/>
    <property type="project" value="UniProtKB-SubCell"/>
</dbReference>
<dbReference type="GO" id="GO:0016020">
    <property type="term" value="C:membrane"/>
    <property type="evidence" value="ECO:0007669"/>
    <property type="project" value="UniProtKB-KW"/>
</dbReference>
<dbReference type="GO" id="GO:0019028">
    <property type="term" value="C:viral capsid"/>
    <property type="evidence" value="ECO:0007669"/>
    <property type="project" value="UniProtKB-KW"/>
</dbReference>
<dbReference type="GO" id="GO:0019031">
    <property type="term" value="C:viral envelope"/>
    <property type="evidence" value="ECO:0007669"/>
    <property type="project" value="UniProtKB-KW"/>
</dbReference>
<dbReference type="GO" id="GO:0055036">
    <property type="term" value="C:virion membrane"/>
    <property type="evidence" value="ECO:0007669"/>
    <property type="project" value="UniProtKB-SubCell"/>
</dbReference>
<dbReference type="GO" id="GO:0005524">
    <property type="term" value="F:ATP binding"/>
    <property type="evidence" value="ECO:0007669"/>
    <property type="project" value="UniProtKB-KW"/>
</dbReference>
<dbReference type="GO" id="GO:0016887">
    <property type="term" value="F:ATP hydrolysis activity"/>
    <property type="evidence" value="ECO:0007669"/>
    <property type="project" value="RHEA"/>
</dbReference>
<dbReference type="GO" id="GO:0015267">
    <property type="term" value="F:channel activity"/>
    <property type="evidence" value="ECO:0007669"/>
    <property type="project" value="UniProtKB-KW"/>
</dbReference>
<dbReference type="GO" id="GO:0003725">
    <property type="term" value="F:double-stranded RNA binding"/>
    <property type="evidence" value="ECO:0007669"/>
    <property type="project" value="InterPro"/>
</dbReference>
<dbReference type="GO" id="GO:0046872">
    <property type="term" value="F:metal ion binding"/>
    <property type="evidence" value="ECO:0007669"/>
    <property type="project" value="UniProtKB-KW"/>
</dbReference>
<dbReference type="GO" id="GO:0004483">
    <property type="term" value="F:mRNA (nucleoside-2'-O-)-methyltransferase activity"/>
    <property type="evidence" value="ECO:0007669"/>
    <property type="project" value="UniProtKB-EC"/>
</dbReference>
<dbReference type="GO" id="GO:0004482">
    <property type="term" value="F:mRNA 5'-cap (guanine-N7-)-methyltransferase activity"/>
    <property type="evidence" value="ECO:0007669"/>
    <property type="project" value="UniProtKB-EC"/>
</dbReference>
<dbReference type="GO" id="GO:0046983">
    <property type="term" value="F:protein dimerization activity"/>
    <property type="evidence" value="ECO:0007669"/>
    <property type="project" value="InterPro"/>
</dbReference>
<dbReference type="GO" id="GO:0003724">
    <property type="term" value="F:RNA helicase activity"/>
    <property type="evidence" value="ECO:0007669"/>
    <property type="project" value="UniProtKB-EC"/>
</dbReference>
<dbReference type="GO" id="GO:0003968">
    <property type="term" value="F:RNA-directed RNA polymerase activity"/>
    <property type="evidence" value="ECO:0007669"/>
    <property type="project" value="UniProtKB-KW"/>
</dbReference>
<dbReference type="GO" id="GO:0004252">
    <property type="term" value="F:serine-type endopeptidase activity"/>
    <property type="evidence" value="ECO:0007669"/>
    <property type="project" value="InterPro"/>
</dbReference>
<dbReference type="GO" id="GO:0005198">
    <property type="term" value="F:structural molecule activity"/>
    <property type="evidence" value="ECO:0007669"/>
    <property type="project" value="InterPro"/>
</dbReference>
<dbReference type="GO" id="GO:0075512">
    <property type="term" value="P:clathrin-dependent endocytosis of virus by host cell"/>
    <property type="evidence" value="ECO:0007669"/>
    <property type="project" value="UniProtKB-KW"/>
</dbReference>
<dbReference type="GO" id="GO:0039654">
    <property type="term" value="P:fusion of virus membrane with host endosome membrane"/>
    <property type="evidence" value="ECO:0007669"/>
    <property type="project" value="UniProtKB-KW"/>
</dbReference>
<dbReference type="GO" id="GO:0034220">
    <property type="term" value="P:monoatomic ion transmembrane transport"/>
    <property type="evidence" value="ECO:0007669"/>
    <property type="project" value="UniProtKB-KW"/>
</dbReference>
<dbReference type="GO" id="GO:0006508">
    <property type="term" value="P:proteolysis"/>
    <property type="evidence" value="ECO:0007669"/>
    <property type="project" value="UniProtKB-KW"/>
</dbReference>
<dbReference type="GO" id="GO:0039520">
    <property type="term" value="P:symbiont-mediated activation of host autophagy"/>
    <property type="evidence" value="ECO:0007669"/>
    <property type="project" value="UniProtKB-KW"/>
</dbReference>
<dbReference type="GO" id="GO:0039545">
    <property type="term" value="P:symbiont-mediated suppression of host cytoplasmic pattern recognition receptor signaling pathway via inhibition of MAVS activity"/>
    <property type="evidence" value="ECO:0007669"/>
    <property type="project" value="UniProtKB-KW"/>
</dbReference>
<dbReference type="GO" id="GO:0039574">
    <property type="term" value="P:symbiont-mediated suppression of host JAK-STAT cascade via inhibition of host TYK2 activity"/>
    <property type="evidence" value="ECO:0007669"/>
    <property type="project" value="UniProtKB-KW"/>
</dbReference>
<dbReference type="GO" id="GO:0039564">
    <property type="term" value="P:symbiont-mediated suppression of host JAK-STAT cascade via inhibition of STAT2 activity"/>
    <property type="evidence" value="ECO:0007669"/>
    <property type="project" value="UniProtKB-KW"/>
</dbReference>
<dbReference type="GO" id="GO:0039502">
    <property type="term" value="P:symbiont-mediated suppression of host type I interferon-mediated signaling pathway"/>
    <property type="evidence" value="ECO:0007669"/>
    <property type="project" value="UniProtKB-KW"/>
</dbReference>
<dbReference type="GO" id="GO:0039694">
    <property type="term" value="P:viral RNA genome replication"/>
    <property type="evidence" value="ECO:0007669"/>
    <property type="project" value="InterPro"/>
</dbReference>
<dbReference type="GO" id="GO:0019062">
    <property type="term" value="P:virion attachment to host cell"/>
    <property type="evidence" value="ECO:0007669"/>
    <property type="project" value="UniProtKB-KW"/>
</dbReference>
<dbReference type="CDD" id="cd20761">
    <property type="entry name" value="capping_2-OMTase_Flaviviridae"/>
    <property type="match status" value="1"/>
</dbReference>
<dbReference type="CDD" id="cd17931">
    <property type="entry name" value="DEXHc_viral_Ns3"/>
    <property type="match status" value="1"/>
</dbReference>
<dbReference type="CDD" id="cd12149">
    <property type="entry name" value="Flavi_E_C"/>
    <property type="match status" value="1"/>
</dbReference>
<dbReference type="CDD" id="cd17038">
    <property type="entry name" value="Flavi_M"/>
    <property type="match status" value="1"/>
</dbReference>
<dbReference type="CDD" id="cd23204">
    <property type="entry name" value="Flavivirus_RdRp"/>
    <property type="match status" value="1"/>
</dbReference>
<dbReference type="CDD" id="cd18806">
    <property type="entry name" value="SF2_C_viral"/>
    <property type="match status" value="1"/>
</dbReference>
<dbReference type="FunFam" id="1.20.1280.260:FF:000001">
    <property type="entry name" value="Envelope glycoprotein"/>
    <property type="match status" value="1"/>
</dbReference>
<dbReference type="FunFam" id="2.60.40.350:FF:000001">
    <property type="entry name" value="Envelope glycoprotein"/>
    <property type="match status" value="1"/>
</dbReference>
<dbReference type="FunFam" id="1.10.10.930:FF:000001">
    <property type="entry name" value="Genome polyprotein"/>
    <property type="match status" value="1"/>
</dbReference>
<dbReference type="FunFam" id="2.60.260.50:FF:000001">
    <property type="entry name" value="Genome polyprotein"/>
    <property type="match status" value="1"/>
</dbReference>
<dbReference type="FunFam" id="3.30.70.2840:FF:000001">
    <property type="entry name" value="Genome polyprotein"/>
    <property type="match status" value="1"/>
</dbReference>
<dbReference type="FunFam" id="3.30.70.2840:FF:000002">
    <property type="entry name" value="Genome polyprotein"/>
    <property type="match status" value="1"/>
</dbReference>
<dbReference type="FunFam" id="3.40.50.150:FF:000105">
    <property type="entry name" value="Genome polyprotein"/>
    <property type="match status" value="1"/>
</dbReference>
<dbReference type="FunFam" id="3.40.50.300:FF:000763">
    <property type="entry name" value="Genome polyprotein"/>
    <property type="match status" value="1"/>
</dbReference>
<dbReference type="Gene3D" id="1.10.10.930">
    <property type="match status" value="1"/>
</dbReference>
<dbReference type="Gene3D" id="1.10.260.90">
    <property type="match status" value="1"/>
</dbReference>
<dbReference type="Gene3D" id="1.20.1280.260">
    <property type="match status" value="1"/>
</dbReference>
<dbReference type="Gene3D" id="2.40.10.120">
    <property type="match status" value="2"/>
</dbReference>
<dbReference type="Gene3D" id="2.60.40.350">
    <property type="match status" value="1"/>
</dbReference>
<dbReference type="Gene3D" id="1.10.8.970">
    <property type="entry name" value="Flavivirus envelope glycoprotein M-like"/>
    <property type="match status" value="1"/>
</dbReference>
<dbReference type="Gene3D" id="2.60.260.50">
    <property type="entry name" value="Flavivirus polyprotein propeptide domain"/>
    <property type="match status" value="1"/>
</dbReference>
<dbReference type="Gene3D" id="3.30.70.2840">
    <property type="entry name" value="Flavivirus RNA-directed RNA polymerase, thumb domain"/>
    <property type="match status" value="3"/>
</dbReference>
<dbReference type="Gene3D" id="3.40.50.300">
    <property type="entry name" value="P-loop containing nucleotide triphosphate hydrolases"/>
    <property type="match status" value="2"/>
</dbReference>
<dbReference type="Gene3D" id="2.60.98.10">
    <property type="entry name" value="Tick-borne Encephalitis virus Glycoprotein, domain 1"/>
    <property type="match status" value="1"/>
</dbReference>
<dbReference type="Gene3D" id="2.40.10.10">
    <property type="entry name" value="Trypsin-like serine proteases"/>
    <property type="match status" value="1"/>
</dbReference>
<dbReference type="Gene3D" id="3.40.50.150">
    <property type="entry name" value="Vaccinia Virus protein VP39"/>
    <property type="match status" value="1"/>
</dbReference>
<dbReference type="Gene3D" id="3.30.67.10">
    <property type="entry name" value="Viral Envelope Glycoprotein, domain 2"/>
    <property type="match status" value="1"/>
</dbReference>
<dbReference type="Gene3D" id="3.30.387.10">
    <property type="entry name" value="Viral Envelope Glycoprotein, domain 3"/>
    <property type="match status" value="1"/>
</dbReference>
<dbReference type="InterPro" id="IPR043502">
    <property type="entry name" value="DNA/RNA_pol_sf"/>
</dbReference>
<dbReference type="InterPro" id="IPR000069">
    <property type="entry name" value="Env_glycoprot_M_flavivir"/>
</dbReference>
<dbReference type="InterPro" id="IPR038302">
    <property type="entry name" value="Env_glycoprot_M_sf_flavivir"/>
</dbReference>
<dbReference type="InterPro" id="IPR013755">
    <property type="entry name" value="Flav_gly_cen_dom_subdom1"/>
</dbReference>
<dbReference type="InterPro" id="IPR001122">
    <property type="entry name" value="Flavi_capsidC"/>
</dbReference>
<dbReference type="InterPro" id="IPR037172">
    <property type="entry name" value="Flavi_capsidC_sf"/>
</dbReference>
<dbReference type="InterPro" id="IPR011492">
    <property type="entry name" value="Flavi_DEAD"/>
</dbReference>
<dbReference type="InterPro" id="IPR027287">
    <property type="entry name" value="Flavi_E_Ig-like"/>
</dbReference>
<dbReference type="InterPro" id="IPR026470">
    <property type="entry name" value="Flavi_E_Stem/Anchor_dom"/>
</dbReference>
<dbReference type="InterPro" id="IPR038345">
    <property type="entry name" value="Flavi_E_Stem/Anchor_dom_sf"/>
</dbReference>
<dbReference type="InterPro" id="IPR011998">
    <property type="entry name" value="Flavi_Glycoprot_E_cen/dimer"/>
</dbReference>
<dbReference type="InterPro" id="IPR001157">
    <property type="entry name" value="Flavi_NS1"/>
</dbReference>
<dbReference type="InterPro" id="IPR000752">
    <property type="entry name" value="Flavi_NS2A"/>
</dbReference>
<dbReference type="InterPro" id="IPR000487">
    <property type="entry name" value="Flavi_NS2B"/>
</dbReference>
<dbReference type="InterPro" id="IPR001850">
    <property type="entry name" value="Flavi_NS3_S7"/>
</dbReference>
<dbReference type="InterPro" id="IPR000404">
    <property type="entry name" value="Flavi_NS4A"/>
</dbReference>
<dbReference type="InterPro" id="IPR001528">
    <property type="entry name" value="Flavi_NS4B"/>
</dbReference>
<dbReference type="InterPro" id="IPR046811">
    <property type="entry name" value="Flavi_NS5_thumb"/>
</dbReference>
<dbReference type="InterPro" id="IPR002535">
    <property type="entry name" value="Flavi_propep"/>
</dbReference>
<dbReference type="InterPro" id="IPR038688">
    <property type="entry name" value="Flavi_propep_sf"/>
</dbReference>
<dbReference type="InterPro" id="IPR047530">
    <property type="entry name" value="Flavi_RdRp"/>
</dbReference>
<dbReference type="InterPro" id="IPR000208">
    <property type="entry name" value="Flavi_RdRp_fingers/palm"/>
</dbReference>
<dbReference type="InterPro" id="IPR000336">
    <property type="entry name" value="Flavivir/Alphavir_Ig-like_sf"/>
</dbReference>
<dbReference type="InterPro" id="IPR014412">
    <property type="entry name" value="Gen_Poly_FLV"/>
</dbReference>
<dbReference type="InterPro" id="IPR036253">
    <property type="entry name" value="Glycoprot_cen/dimer_sf"/>
</dbReference>
<dbReference type="InterPro" id="IPR038055">
    <property type="entry name" value="Glycoprot_E_dimer_dom"/>
</dbReference>
<dbReference type="InterPro" id="IPR013756">
    <property type="entry name" value="GlyE_cen_dom_subdom2"/>
</dbReference>
<dbReference type="InterPro" id="IPR014001">
    <property type="entry name" value="Helicase_ATP-bd"/>
</dbReference>
<dbReference type="InterPro" id="IPR001650">
    <property type="entry name" value="Helicase_C-like"/>
</dbReference>
<dbReference type="InterPro" id="IPR014756">
    <property type="entry name" value="Ig_E-set"/>
</dbReference>
<dbReference type="InterPro" id="IPR026490">
    <property type="entry name" value="mRNA_cap_0/1_MeTrfase"/>
</dbReference>
<dbReference type="InterPro" id="IPR049486">
    <property type="entry name" value="NS3-hel_C_flaviviridae"/>
</dbReference>
<dbReference type="InterPro" id="IPR027417">
    <property type="entry name" value="P-loop_NTPase"/>
</dbReference>
<dbReference type="InterPro" id="IPR009003">
    <property type="entry name" value="Peptidase_S1_PA"/>
</dbReference>
<dbReference type="InterPro" id="IPR043504">
    <property type="entry name" value="Peptidase_S1_PA_chymotrypsin"/>
</dbReference>
<dbReference type="InterPro" id="IPR007094">
    <property type="entry name" value="RNA-dir_pol_PSvirus"/>
</dbReference>
<dbReference type="InterPro" id="IPR002877">
    <property type="entry name" value="RNA_MeTrfase_FtsJ_dom"/>
</dbReference>
<dbReference type="InterPro" id="IPR029063">
    <property type="entry name" value="SAM-dependent_MTases_sf"/>
</dbReference>
<dbReference type="NCBIfam" id="TIGR04240">
    <property type="entry name" value="flavi_E_stem"/>
    <property type="match status" value="1"/>
</dbReference>
<dbReference type="Pfam" id="PF20907">
    <property type="entry name" value="Flav_NS3-hel_C"/>
    <property type="match status" value="1"/>
</dbReference>
<dbReference type="Pfam" id="PF01003">
    <property type="entry name" value="Flavi_capsid"/>
    <property type="match status" value="1"/>
</dbReference>
<dbReference type="Pfam" id="PF07652">
    <property type="entry name" value="Flavi_DEAD"/>
    <property type="match status" value="1"/>
</dbReference>
<dbReference type="Pfam" id="PF21659">
    <property type="entry name" value="Flavi_E_stem"/>
    <property type="match status" value="1"/>
</dbReference>
<dbReference type="Pfam" id="PF02832">
    <property type="entry name" value="Flavi_glycop_C"/>
    <property type="match status" value="1"/>
</dbReference>
<dbReference type="Pfam" id="PF00869">
    <property type="entry name" value="Flavi_glycoprot"/>
    <property type="match status" value="1"/>
</dbReference>
<dbReference type="Pfam" id="PF01004">
    <property type="entry name" value="Flavi_M"/>
    <property type="match status" value="1"/>
</dbReference>
<dbReference type="Pfam" id="PF00948">
    <property type="entry name" value="Flavi_NS1"/>
    <property type="match status" value="1"/>
</dbReference>
<dbReference type="Pfam" id="PF01005">
    <property type="entry name" value="Flavi_NS2A"/>
    <property type="match status" value="1"/>
</dbReference>
<dbReference type="Pfam" id="PF01002">
    <property type="entry name" value="Flavi_NS2B"/>
    <property type="match status" value="1"/>
</dbReference>
<dbReference type="Pfam" id="PF01350">
    <property type="entry name" value="Flavi_NS4A"/>
    <property type="match status" value="1"/>
</dbReference>
<dbReference type="Pfam" id="PF01349">
    <property type="entry name" value="Flavi_NS4B"/>
    <property type="match status" value="1"/>
</dbReference>
<dbReference type="Pfam" id="PF00972">
    <property type="entry name" value="Flavi_NS5"/>
    <property type="match status" value="1"/>
</dbReference>
<dbReference type="Pfam" id="PF20483">
    <property type="entry name" value="Flavi_NS5_thumb"/>
    <property type="match status" value="1"/>
</dbReference>
<dbReference type="Pfam" id="PF01570">
    <property type="entry name" value="Flavi_propep"/>
    <property type="match status" value="1"/>
</dbReference>
<dbReference type="Pfam" id="PF01728">
    <property type="entry name" value="FtsJ"/>
    <property type="match status" value="1"/>
</dbReference>
<dbReference type="Pfam" id="PF00949">
    <property type="entry name" value="Peptidase_S7"/>
    <property type="match status" value="1"/>
</dbReference>
<dbReference type="PIRSF" id="PIRSF003817">
    <property type="entry name" value="Gen_Poly_FLV"/>
    <property type="match status" value="1"/>
</dbReference>
<dbReference type="SMART" id="SM00487">
    <property type="entry name" value="DEXDc"/>
    <property type="match status" value="1"/>
</dbReference>
<dbReference type="SMART" id="SM00490">
    <property type="entry name" value="HELICc"/>
    <property type="match status" value="1"/>
</dbReference>
<dbReference type="SUPFAM" id="SSF56672">
    <property type="entry name" value="DNA/RNA polymerases"/>
    <property type="match status" value="1"/>
</dbReference>
<dbReference type="SUPFAM" id="SSF81296">
    <property type="entry name" value="E set domains"/>
    <property type="match status" value="1"/>
</dbReference>
<dbReference type="SUPFAM" id="SSF101257">
    <property type="entry name" value="Flavivirus capsid protein C"/>
    <property type="match status" value="1"/>
</dbReference>
<dbReference type="SUPFAM" id="SSF52540">
    <property type="entry name" value="P-loop containing nucleoside triphosphate hydrolases"/>
    <property type="match status" value="2"/>
</dbReference>
<dbReference type="SUPFAM" id="SSF53335">
    <property type="entry name" value="S-adenosyl-L-methionine-dependent methyltransferases"/>
    <property type="match status" value="1"/>
</dbReference>
<dbReference type="SUPFAM" id="SSF50494">
    <property type="entry name" value="Trypsin-like serine proteases"/>
    <property type="match status" value="1"/>
</dbReference>
<dbReference type="SUPFAM" id="SSF56983">
    <property type="entry name" value="Viral glycoprotein, central and dimerisation domains"/>
    <property type="match status" value="1"/>
</dbReference>
<dbReference type="PROSITE" id="PS51527">
    <property type="entry name" value="FLAVIVIRUS_NS2B"/>
    <property type="match status" value="1"/>
</dbReference>
<dbReference type="PROSITE" id="PS51528">
    <property type="entry name" value="FLAVIVIRUS_NS3PRO"/>
    <property type="match status" value="1"/>
</dbReference>
<dbReference type="PROSITE" id="PS51192">
    <property type="entry name" value="HELICASE_ATP_BIND_1"/>
    <property type="match status" value="1"/>
</dbReference>
<dbReference type="PROSITE" id="PS51194">
    <property type="entry name" value="HELICASE_CTER"/>
    <property type="match status" value="1"/>
</dbReference>
<dbReference type="PROSITE" id="PS50507">
    <property type="entry name" value="RDRP_SSRNA_POS"/>
    <property type="match status" value="1"/>
</dbReference>
<dbReference type="PROSITE" id="PS51591">
    <property type="entry name" value="RNA_CAP01_NS5_MT"/>
    <property type="match status" value="1"/>
</dbReference>
<keyword id="KW-0002">3D-structure</keyword>
<keyword id="KW-0007">Acetylation</keyword>
<keyword id="KW-1072">Activation of host autophagy by virus</keyword>
<keyword id="KW-0067">ATP-binding</keyword>
<keyword id="KW-0167">Capsid protein</keyword>
<keyword id="KW-1165">Clathrin-mediated endocytosis of virus by host</keyword>
<keyword id="KW-0165">Cleavage on pair of basic residues</keyword>
<keyword id="KW-1015">Disulfide bond</keyword>
<keyword id="KW-1170">Fusion of virus membrane with host endosomal membrane</keyword>
<keyword id="KW-1168">Fusion of virus membrane with host membrane</keyword>
<keyword id="KW-0325">Glycoprotein</keyword>
<keyword id="KW-0347">Helicase</keyword>
<keyword id="KW-1035">Host cytoplasm</keyword>
<keyword id="KW-1038">Host endoplasmic reticulum</keyword>
<keyword id="KW-1043">Host membrane</keyword>
<keyword id="KW-1045">Host mitochondrion</keyword>
<keyword id="KW-1048">Host nucleus</keyword>
<keyword id="KW-0945">Host-virus interaction</keyword>
<keyword id="KW-0378">Hydrolase</keyword>
<keyword id="KW-1090">Inhibition of host innate immune response by virus</keyword>
<keyword id="KW-1114">Inhibition of host interferon signaling pathway by virus</keyword>
<keyword id="KW-1097">Inhibition of host MAVS by virus</keyword>
<keyword id="KW-1113">Inhibition of host RLR pathway by virus</keyword>
<keyword id="KW-1106">Inhibition of host STAT2 by virus</keyword>
<keyword id="KW-1112">Inhibition of host TYK2 by virus</keyword>
<keyword id="KW-0922">Interferon antiviral system evasion</keyword>
<keyword id="KW-0407">Ion channel</keyword>
<keyword id="KW-0406">Ion transport</keyword>
<keyword id="KW-0472">Membrane</keyword>
<keyword id="KW-0479">Metal-binding</keyword>
<keyword id="KW-0489">Methyltransferase</keyword>
<keyword id="KW-0506">mRNA capping</keyword>
<keyword id="KW-0507">mRNA processing</keyword>
<keyword id="KW-0511">Multifunctional enzyme</keyword>
<keyword id="KW-0547">Nucleotide-binding</keyword>
<keyword id="KW-0548">Nucleotidyltransferase</keyword>
<keyword id="KW-0597">Phosphoprotein</keyword>
<keyword id="KW-0645">Protease</keyword>
<keyword id="KW-1185">Reference proteome</keyword>
<keyword id="KW-0694">RNA-binding</keyword>
<keyword id="KW-0696">RNA-directed RNA polymerase</keyword>
<keyword id="KW-0949">S-adenosyl-L-methionine</keyword>
<keyword id="KW-0964">Secreted</keyword>
<keyword id="KW-0720">Serine protease</keyword>
<keyword id="KW-0941">Suppressor of RNA silencing</keyword>
<keyword id="KW-0804">Transcription</keyword>
<keyword id="KW-0805">Transcription regulation</keyword>
<keyword id="KW-0808">Transferase</keyword>
<keyword id="KW-0812">Transmembrane</keyword>
<keyword id="KW-1133">Transmembrane helix</keyword>
<keyword id="KW-0813">Transport</keyword>
<keyword id="KW-0832">Ubl conjugation</keyword>
<keyword id="KW-1161">Viral attachment to host cell</keyword>
<keyword id="KW-0261">Viral envelope protein</keyword>
<keyword id="KW-0899">Viral immunoevasion</keyword>
<keyword id="KW-1182">Viral ion channel</keyword>
<keyword id="KW-1162">Viral penetration into host cytoplasm</keyword>
<keyword id="KW-0693">Viral RNA replication</keyword>
<keyword id="KW-0946">Virion</keyword>
<keyword id="KW-1164">Virus endocytosis by host</keyword>
<keyword id="KW-1160">Virus entry into host cell</keyword>
<keyword id="KW-0862">Zinc</keyword>
<name>POLG_DEN1W</name>
<evidence type="ECO:0000250" key="1">
    <source>
        <dbReference type="UniProtKB" id="P03314"/>
    </source>
</evidence>
<evidence type="ECO:0000250" key="2">
    <source>
        <dbReference type="UniProtKB" id="P14335"/>
    </source>
</evidence>
<evidence type="ECO:0000250" key="3">
    <source>
        <dbReference type="UniProtKB" id="P14336"/>
    </source>
</evidence>
<evidence type="ECO:0000250" key="4">
    <source>
        <dbReference type="UniProtKB" id="P14340"/>
    </source>
</evidence>
<evidence type="ECO:0000250" key="5">
    <source>
        <dbReference type="UniProtKB" id="P29990"/>
    </source>
</evidence>
<evidence type="ECO:0000250" key="6">
    <source>
        <dbReference type="UniProtKB" id="P29991"/>
    </source>
</evidence>
<evidence type="ECO:0000250" key="7">
    <source>
        <dbReference type="UniProtKB" id="Q32ZE1"/>
    </source>
</evidence>
<evidence type="ECO:0000250" key="8">
    <source>
        <dbReference type="UniProtKB" id="Q6YMS4"/>
    </source>
</evidence>
<evidence type="ECO:0000250" key="9">
    <source>
        <dbReference type="UniProtKB" id="Q9Q6P4"/>
    </source>
</evidence>
<evidence type="ECO:0000255" key="10"/>
<evidence type="ECO:0000255" key="11">
    <source>
        <dbReference type="PROSITE-ProRule" id="PRU00498"/>
    </source>
</evidence>
<evidence type="ECO:0000255" key="12">
    <source>
        <dbReference type="PROSITE-ProRule" id="PRU00539"/>
    </source>
</evidence>
<evidence type="ECO:0000255" key="13">
    <source>
        <dbReference type="PROSITE-ProRule" id="PRU00541"/>
    </source>
</evidence>
<evidence type="ECO:0000255" key="14">
    <source>
        <dbReference type="PROSITE-ProRule" id="PRU00542"/>
    </source>
</evidence>
<evidence type="ECO:0000255" key="15">
    <source>
        <dbReference type="PROSITE-ProRule" id="PRU00859"/>
    </source>
</evidence>
<evidence type="ECO:0000255" key="16">
    <source>
        <dbReference type="PROSITE-ProRule" id="PRU00860"/>
    </source>
</evidence>
<evidence type="ECO:0000255" key="17">
    <source>
        <dbReference type="PROSITE-ProRule" id="PRU00924"/>
    </source>
</evidence>
<evidence type="ECO:0000269" key="18">
    <source>
    </source>
</evidence>
<evidence type="ECO:0000269" key="19">
    <source>
    </source>
</evidence>
<evidence type="ECO:0000269" key="20">
    <source>
    </source>
</evidence>
<evidence type="ECO:0000269" key="21">
    <source>
    </source>
</evidence>
<evidence type="ECO:0000269" key="22">
    <source>
    </source>
</evidence>
<evidence type="ECO:0000269" key="23">
    <source>
    </source>
</evidence>
<evidence type="ECO:0000269" key="24">
    <source>
    </source>
</evidence>
<evidence type="ECO:0000269" key="25">
    <source>
    </source>
</evidence>
<evidence type="ECO:0000269" key="26">
    <source>
    </source>
</evidence>
<evidence type="ECO:0000269" key="27">
    <source>
    </source>
</evidence>
<evidence type="ECO:0000269" key="28">
    <source>
    </source>
</evidence>
<evidence type="ECO:0000269" key="29">
    <source>
    </source>
</evidence>
<evidence type="ECO:0000269" key="30">
    <source>
    </source>
</evidence>
<evidence type="ECO:0000269" key="31">
    <source>
    </source>
</evidence>
<evidence type="ECO:0000269" key="32">
    <source>
    </source>
</evidence>
<evidence type="ECO:0000269" key="33">
    <source>
    </source>
</evidence>
<evidence type="ECO:0000269" key="34">
    <source>
    </source>
</evidence>
<evidence type="ECO:0000269" key="35">
    <source>
    </source>
</evidence>
<evidence type="ECO:0000269" key="36">
    <source>
    </source>
</evidence>
<evidence type="ECO:0000269" key="37">
    <source>
    </source>
</evidence>
<evidence type="ECO:0000269" key="38">
    <source>
    </source>
</evidence>
<evidence type="ECO:0000269" key="39">
    <source>
    </source>
</evidence>
<evidence type="ECO:0000269" key="40">
    <source>
    </source>
</evidence>
<evidence type="ECO:0000269" key="41">
    <source>
    </source>
</evidence>
<evidence type="ECO:0000269" key="42">
    <source>
    </source>
</evidence>
<evidence type="ECO:0000269" key="43">
    <source>
    </source>
</evidence>
<evidence type="ECO:0000269" key="44">
    <source>
    </source>
</evidence>
<evidence type="ECO:0000269" key="45">
    <source>
    </source>
</evidence>
<evidence type="ECO:0000269" key="46">
    <source>
    </source>
</evidence>
<evidence type="ECO:0000269" key="47">
    <source>
    </source>
</evidence>
<evidence type="ECO:0000269" key="48">
    <source>
    </source>
</evidence>
<evidence type="ECO:0000269" key="49">
    <source>
    </source>
</evidence>
<evidence type="ECO:0000269" key="50">
    <source>
    </source>
</evidence>
<evidence type="ECO:0000269" key="51">
    <source>
    </source>
</evidence>
<evidence type="ECO:0000269" key="52">
    <source>
    </source>
</evidence>
<evidence type="ECO:0000269" key="53">
    <source>
    </source>
</evidence>
<evidence type="ECO:0000269" key="54">
    <source>
    </source>
</evidence>
<evidence type="ECO:0000269" key="55">
    <source>
    </source>
</evidence>
<evidence type="ECO:0000269" key="56">
    <source>
    </source>
</evidence>
<evidence type="ECO:0000269" key="57">
    <source>
    </source>
</evidence>
<evidence type="ECO:0000269" key="58">
    <source>
    </source>
</evidence>
<evidence type="ECO:0000303" key="59">
    <source>
    </source>
</evidence>
<evidence type="ECO:0000303" key="60">
    <source>
    </source>
</evidence>
<evidence type="ECO:0000303" key="61">
    <source>
    </source>
</evidence>
<evidence type="ECO:0000305" key="62"/>
<evidence type="ECO:0000305" key="63">
    <source>
    </source>
</evidence>
<evidence type="ECO:0000305" key="64">
    <source>
    </source>
</evidence>
<evidence type="ECO:0007829" key="65">
    <source>
        <dbReference type="PDB" id="3LKW"/>
    </source>
</evidence>
<evidence type="ECO:0007829" key="66">
    <source>
        <dbReference type="PDB" id="4AL8"/>
    </source>
</evidence>
<evidence type="ECO:0007829" key="67">
    <source>
        <dbReference type="PDB" id="4GSX"/>
    </source>
</evidence>
<evidence type="ECO:0007829" key="68">
    <source>
        <dbReference type="PDB" id="4GT0"/>
    </source>
</evidence>
<evidence type="ECO:0007829" key="69">
    <source>
        <dbReference type="PDB" id="4OIG"/>
    </source>
</evidence>
<feature type="chain" id="PRO_0000405207" description="Genome polyprotein">
    <location>
        <begin position="1"/>
        <end position="3392"/>
    </location>
</feature>
<feature type="chain" id="PRO_0000264658" description="Capsid protein C" evidence="5">
    <location>
        <begin position="1"/>
        <end position="100"/>
    </location>
</feature>
<feature type="propeptide" id="PRO_0000264659" description="ER anchor for the capsid protein C, removed in mature form by serine protease NS3" evidence="5">
    <location>
        <begin position="101"/>
        <end position="114"/>
    </location>
</feature>
<feature type="chain" id="PRO_0000264660" description="Protein prM" evidence="5">
    <location>
        <begin position="115"/>
        <end position="280"/>
    </location>
</feature>
<feature type="chain" id="PRO_0000264661" description="Peptide pr" evidence="5">
    <location>
        <begin position="115"/>
        <end position="205"/>
    </location>
</feature>
<feature type="chain" id="PRO_0000264662" description="Small envelope protein M" evidence="5">
    <location>
        <begin position="206"/>
        <end position="280"/>
    </location>
</feature>
<feature type="chain" id="PRO_0000264663" description="Envelope protein E" evidence="5">
    <location>
        <begin position="281"/>
        <end position="775"/>
    </location>
</feature>
<feature type="chain" id="PRO_0000264664" description="Non-structural protein 1" evidence="5">
    <location>
        <begin position="776"/>
        <end position="1127"/>
    </location>
</feature>
<feature type="chain" id="PRO_0000264666" description="Non-structural protein 2A" evidence="5">
    <location>
        <begin position="1128"/>
        <end position="1345"/>
    </location>
</feature>
<feature type="chain" id="PRO_0000264667" description="Serine protease subunit NS2B" evidence="5">
    <location>
        <begin position="1346"/>
        <end position="1475"/>
    </location>
</feature>
<feature type="chain" id="PRO_0000264668" description="Serine protease NS3" evidence="5">
    <location>
        <begin position="1476"/>
        <end position="2094"/>
    </location>
</feature>
<feature type="chain" id="PRO_0000264669" description="Non-structural protein 4A" evidence="5">
    <location>
        <begin position="2095"/>
        <end position="2221"/>
    </location>
</feature>
<feature type="peptide" id="PRO_0000264670" description="Peptide 2k" evidence="5">
    <location>
        <begin position="2222"/>
        <end position="2244"/>
    </location>
</feature>
<feature type="chain" id="PRO_0000264671" description="Non-structural protein 4B" evidence="5">
    <location>
        <begin position="2245"/>
        <end position="2493"/>
    </location>
</feature>
<feature type="chain" id="PRO_0000264672" description="RNA-directed RNA polymerase NS5" evidence="5">
    <location>
        <begin position="2494"/>
        <end position="3392"/>
    </location>
</feature>
<feature type="topological domain" description="Cytoplasmic" evidence="10">
    <location>
        <begin position="1"/>
        <end position="101"/>
    </location>
</feature>
<feature type="transmembrane region" description="Helical" evidence="10">
    <location>
        <begin position="102"/>
        <end position="119"/>
    </location>
</feature>
<feature type="topological domain" description="Extracellular" evidence="10">
    <location>
        <begin position="120"/>
        <end position="242"/>
    </location>
</feature>
<feature type="transmembrane region" description="Helical" evidence="10">
    <location>
        <begin position="243"/>
        <end position="260"/>
    </location>
</feature>
<feature type="topological domain" description="Cytoplasmic" evidence="10">
    <location>
        <position position="261"/>
    </location>
</feature>
<feature type="transmembrane region" description="Helical" evidence="10">
    <location>
        <begin position="262"/>
        <end position="280"/>
    </location>
</feature>
<feature type="topological domain" description="Extracellular" evidence="10">
    <location>
        <begin position="281"/>
        <end position="725"/>
    </location>
</feature>
<feature type="transmembrane region" description="Helical" evidence="10">
    <location>
        <begin position="726"/>
        <end position="746"/>
    </location>
</feature>
<feature type="topological domain" description="Cytoplasmic" evidence="10">
    <location>
        <begin position="747"/>
        <end position="752"/>
    </location>
</feature>
<feature type="transmembrane region" description="Helical" evidence="10">
    <location>
        <begin position="753"/>
        <end position="773"/>
    </location>
</feature>
<feature type="topological domain" description="Extracellular" evidence="10">
    <location>
        <begin position="774"/>
        <end position="1195"/>
    </location>
</feature>
<feature type="transmembrane region" description="Helical" evidence="10 60">
    <location>
        <begin position="1196"/>
        <end position="1220"/>
    </location>
</feature>
<feature type="topological domain" description="Cytoplasmic" evidence="10 60">
    <location>
        <begin position="1221"/>
        <end position="1226"/>
    </location>
</feature>
<feature type="transmembrane region" description="Helical" evidence="10 60">
    <location>
        <begin position="1227"/>
        <end position="1245"/>
    </location>
</feature>
<feature type="topological domain" description="Lumenal" evidence="10 60">
    <location>
        <begin position="1246"/>
        <end position="1269"/>
    </location>
</feature>
<feature type="transmembrane region" description="Helical" evidence="10 60">
    <location>
        <begin position="1270"/>
        <end position="1290"/>
    </location>
</feature>
<feature type="topological domain" description="Cytoplasmic" evidence="10 60">
    <location>
        <position position="1291"/>
    </location>
</feature>
<feature type="transmembrane region" description="Helical" evidence="10 60">
    <location>
        <begin position="1292"/>
        <end position="1310"/>
    </location>
</feature>
<feature type="topological domain" description="Lumenal" evidence="10 60">
    <location>
        <begin position="1311"/>
        <end position="1315"/>
    </location>
</feature>
<feature type="transmembrane region" description="Helical" evidence="10 60">
    <location>
        <begin position="1316"/>
        <end position="1336"/>
    </location>
</feature>
<feature type="topological domain" description="Cytoplasmic" evidence="10 60">
    <location>
        <begin position="1337"/>
        <end position="1351"/>
    </location>
</feature>
<feature type="transmembrane region" description="Helical" evidence="47">
    <location>
        <begin position="1352"/>
        <end position="1370"/>
    </location>
</feature>
<feature type="topological domain" description="Lumenal" evidence="47">
    <location>
        <position position="1371"/>
    </location>
</feature>
<feature type="transmembrane region" description="Helical" evidence="47">
    <location>
        <begin position="1372"/>
        <end position="1391"/>
    </location>
</feature>
<feature type="topological domain" description="Cytoplasmic" evidence="47">
    <location>
        <begin position="1392"/>
        <end position="1447"/>
    </location>
</feature>
<feature type="intramembrane region" description="Helical" evidence="47">
    <location>
        <begin position="1448"/>
        <end position="1468"/>
    </location>
</feature>
<feature type="topological domain" description="Cytoplasmic" evidence="10">
    <location>
        <begin position="1469"/>
        <end position="2148"/>
    </location>
</feature>
<feature type="transmembrane region" description="Helical" evidence="30">
    <location>
        <begin position="2149"/>
        <end position="2169"/>
    </location>
</feature>
<feature type="topological domain" description="Lumenal" evidence="30">
    <location>
        <begin position="2170"/>
        <end position="2171"/>
    </location>
</feature>
<feature type="intramembrane region" description="Helical" evidence="30">
    <location>
        <begin position="2172"/>
        <end position="2192"/>
    </location>
</feature>
<feature type="topological domain" description="Lumenal" evidence="30">
    <location>
        <position position="2193"/>
    </location>
</feature>
<feature type="transmembrane region" description="Helical" evidence="30">
    <location>
        <begin position="2194"/>
        <end position="2214"/>
    </location>
</feature>
<feature type="topological domain" description="Cytoplasmic" evidence="30">
    <location>
        <begin position="2215"/>
        <end position="2229"/>
    </location>
</feature>
<feature type="transmembrane region" description="Helical; Note=Signal for NS4B" evidence="10 30 63">
    <location>
        <begin position="2230"/>
        <end position="2244"/>
    </location>
</feature>
<feature type="topological domain" description="Lumenal" evidence="63">
    <location>
        <begin position="2245"/>
        <end position="2276"/>
    </location>
</feature>
<feature type="intramembrane region" description="Helical" evidence="10 63">
    <location>
        <begin position="2277"/>
        <end position="2297"/>
    </location>
</feature>
<feature type="topological domain" description="Lumenal" evidence="63">
    <location>
        <begin position="2298"/>
        <end position="2349"/>
    </location>
</feature>
<feature type="transmembrane region" description="Helical" evidence="10 63">
    <location>
        <begin position="2350"/>
        <end position="2370"/>
    </location>
</feature>
<feature type="topological domain" description="Cytoplasmic" evidence="63">
    <location>
        <begin position="2371"/>
        <end position="2415"/>
    </location>
</feature>
<feature type="transmembrane region" description="Helical" evidence="10 63">
    <location>
        <begin position="2416"/>
        <end position="2436"/>
    </location>
</feature>
<feature type="topological domain" description="Lumenal" evidence="63">
    <location>
        <begin position="2437"/>
        <end position="2461"/>
    </location>
</feature>
<feature type="transmembrane region" description="Helical" evidence="10 63">
    <location>
        <begin position="2462"/>
        <end position="2482"/>
    </location>
</feature>
<feature type="topological domain" description="Cytoplasmic" evidence="64">
    <location>
        <begin position="2483"/>
        <end position="3392"/>
    </location>
</feature>
<feature type="domain" description="Peptidase S7" evidence="16">
    <location>
        <begin position="1476"/>
        <end position="1653"/>
    </location>
</feature>
<feature type="domain" description="Helicase ATP-binding" evidence="13">
    <location>
        <begin position="1656"/>
        <end position="1812"/>
    </location>
</feature>
<feature type="domain" description="Helicase C-terminal" evidence="14">
    <location>
        <begin position="1822"/>
        <end position="1988"/>
    </location>
</feature>
<feature type="domain" description="mRNA cap 0-1 NS5-type MT" evidence="17">
    <location>
        <begin position="2495"/>
        <end position="2756"/>
    </location>
</feature>
<feature type="domain" description="RdRp catalytic" evidence="12">
    <location>
        <begin position="3020"/>
        <end position="3169"/>
    </location>
</feature>
<feature type="region of interest" description="Interaction with host EXOC1" evidence="37">
    <location>
        <begin position="1"/>
        <end position="15"/>
    </location>
</feature>
<feature type="region of interest" description="Hydrophobic; homodimerization of capsid protein C" evidence="5">
    <location>
        <begin position="37"/>
        <end position="72"/>
    </location>
</feature>
<feature type="region of interest" description="Fusion peptide" evidence="3">
    <location>
        <begin position="378"/>
        <end position="391"/>
    </location>
</feature>
<feature type="region of interest" description="Interacts with and activates NS3 protease" evidence="15">
    <location>
        <begin position="1398"/>
        <end position="1437"/>
    </location>
</feature>
<feature type="region of interest" description="Important for RNA-binding" evidence="4">
    <location>
        <begin position="1660"/>
        <end position="1663"/>
    </location>
</feature>
<feature type="short sequence motif" description="DEAH box" evidence="13">
    <location>
        <begin position="1760"/>
        <end position="1763"/>
    </location>
</feature>
<feature type="short sequence motif" description="SUMO-interacting motif" evidence="5">
    <location>
        <begin position="2570"/>
        <end position="2573"/>
    </location>
</feature>
<feature type="active site" description="Charge relay system; for serine protease NS3 activity" evidence="16">
    <location>
        <position position="1526"/>
    </location>
</feature>
<feature type="active site" description="Charge relay system; for serine protease NS3 activity" evidence="16">
    <location>
        <position position="1550"/>
    </location>
</feature>
<feature type="active site" description="Charge relay system; for serine protease NS3 activity" evidence="16">
    <location>
        <position position="1610"/>
    </location>
</feature>
<feature type="active site" description="For 2'-O-MTase activity" evidence="8">
    <location>
        <position position="2554"/>
    </location>
</feature>
<feature type="active site" description="For 2'-O-MTase activity" evidence="8">
    <location>
        <position position="2639"/>
    </location>
</feature>
<feature type="active site" description="For 2'-O-MTase activity" evidence="8">
    <location>
        <position position="2673"/>
    </location>
</feature>
<feature type="active site" description="For 2'-O-MTase activity" evidence="8">
    <location>
        <position position="2709"/>
    </location>
</feature>
<feature type="binding site" evidence="13">
    <location>
        <begin position="1669"/>
        <end position="1676"/>
    </location>
    <ligand>
        <name>ATP</name>
        <dbReference type="ChEBI" id="CHEBI:30616"/>
    </ligand>
</feature>
<feature type="binding site" evidence="17">
    <location>
        <position position="2549"/>
    </location>
    <ligand>
        <name>S-adenosyl-L-methionine</name>
        <dbReference type="ChEBI" id="CHEBI:59789"/>
    </ligand>
</feature>
<feature type="binding site" evidence="17">
    <location>
        <position position="2579"/>
    </location>
    <ligand>
        <name>S-adenosyl-L-methionine</name>
        <dbReference type="ChEBI" id="CHEBI:59789"/>
    </ligand>
</feature>
<feature type="binding site" evidence="17">
    <location>
        <position position="2580"/>
    </location>
    <ligand>
        <name>S-adenosyl-L-methionine</name>
        <dbReference type="ChEBI" id="CHEBI:59789"/>
    </ligand>
</feature>
<feature type="binding site" evidence="17">
    <location>
        <position position="2597"/>
    </location>
    <ligand>
        <name>S-adenosyl-L-methionine</name>
        <dbReference type="ChEBI" id="CHEBI:59789"/>
    </ligand>
</feature>
<feature type="binding site" evidence="17">
    <location>
        <position position="2598"/>
    </location>
    <ligand>
        <name>S-adenosyl-L-methionine</name>
        <dbReference type="ChEBI" id="CHEBI:59789"/>
    </ligand>
</feature>
<feature type="binding site" evidence="17">
    <location>
        <position position="2624"/>
    </location>
    <ligand>
        <name>S-adenosyl-L-methionine</name>
        <dbReference type="ChEBI" id="CHEBI:59789"/>
    </ligand>
</feature>
<feature type="binding site" evidence="17">
    <location>
        <position position="2625"/>
    </location>
    <ligand>
        <name>S-adenosyl-L-methionine</name>
        <dbReference type="ChEBI" id="CHEBI:59789"/>
    </ligand>
</feature>
<feature type="binding site" evidence="17">
    <location>
        <position position="2640"/>
    </location>
    <ligand>
        <name>S-adenosyl-L-methionine</name>
        <dbReference type="ChEBI" id="CHEBI:59789"/>
    </ligand>
</feature>
<feature type="binding site" evidence="17">
    <location>
        <position position="2711"/>
    </location>
    <ligand>
        <name>S-adenosyl-L-methionine</name>
        <dbReference type="ChEBI" id="CHEBI:59789"/>
    </ligand>
</feature>
<feature type="binding site" evidence="8">
    <location>
        <position position="2930"/>
    </location>
    <ligand>
        <name>Zn(2+)</name>
        <dbReference type="ChEBI" id="CHEBI:29105"/>
        <label>1</label>
    </ligand>
</feature>
<feature type="binding site" evidence="8">
    <location>
        <position position="2934"/>
    </location>
    <ligand>
        <name>Zn(2+)</name>
        <dbReference type="ChEBI" id="CHEBI:29105"/>
        <label>1</label>
    </ligand>
</feature>
<feature type="binding site" evidence="8">
    <location>
        <position position="2939"/>
    </location>
    <ligand>
        <name>Zn(2+)</name>
        <dbReference type="ChEBI" id="CHEBI:29105"/>
        <label>1</label>
    </ligand>
</feature>
<feature type="binding site" evidence="8">
    <location>
        <position position="2942"/>
    </location>
    <ligand>
        <name>Zn(2+)</name>
        <dbReference type="ChEBI" id="CHEBI:29105"/>
        <label>1</label>
    </ligand>
</feature>
<feature type="binding site" evidence="8">
    <location>
        <position position="3204"/>
    </location>
    <ligand>
        <name>Zn(2+)</name>
        <dbReference type="ChEBI" id="CHEBI:29105"/>
        <label>2</label>
    </ligand>
</feature>
<feature type="binding site" evidence="8">
    <location>
        <position position="3220"/>
    </location>
    <ligand>
        <name>Zn(2+)</name>
        <dbReference type="ChEBI" id="CHEBI:29105"/>
        <label>2</label>
    </ligand>
</feature>
<feature type="binding site" evidence="8">
    <location>
        <position position="3339"/>
    </location>
    <ligand>
        <name>Zn(2+)</name>
        <dbReference type="ChEBI" id="CHEBI:29105"/>
        <label>2</label>
    </ligand>
</feature>
<feature type="site" description="Cleavage; by viral protease NS3" evidence="5">
    <location>
        <begin position="100"/>
        <end position="101"/>
    </location>
</feature>
<feature type="site" description="Cleavage; by host signal peptidase" evidence="5">
    <location>
        <begin position="114"/>
        <end position="115"/>
    </location>
</feature>
<feature type="site" description="Cleavage; by host furin" evidence="5 10">
    <location>
        <begin position="205"/>
        <end position="206"/>
    </location>
</feature>
<feature type="site" description="Cleavage; by host signal peptidase" evidence="5">
    <location>
        <begin position="280"/>
        <end position="281"/>
    </location>
</feature>
<feature type="site" description="Cleavage; by host signal peptidase" evidence="5">
    <location>
        <begin position="775"/>
        <end position="776"/>
    </location>
</feature>
<feature type="site" description="Cleavage; by host" evidence="5">
    <location>
        <begin position="1127"/>
        <end position="1128"/>
    </location>
</feature>
<feature type="site" description="Cleavage; by viral protease NS3" evidence="5">
    <location>
        <begin position="1345"/>
        <end position="1346"/>
    </location>
</feature>
<feature type="site" description="Cleavage; by autolysis" evidence="5">
    <location>
        <begin position="1475"/>
        <end position="1476"/>
    </location>
</feature>
<feature type="site" description="Involved in NS3 ATPase and RTPase activities" evidence="2">
    <location>
        <position position="1933"/>
    </location>
</feature>
<feature type="site" description="Involved in NS3 ATPase and RTPase activities" evidence="2">
    <location>
        <position position="1936"/>
    </location>
</feature>
<feature type="site" description="Cleavage; by autolysis" evidence="5">
    <location>
        <begin position="2094"/>
        <end position="2095"/>
    </location>
</feature>
<feature type="site" description="Cleavage; by viral protease NS3" evidence="5">
    <location>
        <begin position="2221"/>
        <end position="2222"/>
    </location>
</feature>
<feature type="site" description="Cleavage; by host signal peptidase" evidence="5">
    <location>
        <begin position="2244"/>
        <end position="2245"/>
    </location>
</feature>
<feature type="site" description="Cleavage; by viral protease NS3" evidence="5">
    <location>
        <begin position="2493"/>
        <end position="2494"/>
    </location>
</feature>
<feature type="site" description="mRNA cap binding" evidence="17">
    <location>
        <position position="2507"/>
    </location>
</feature>
<feature type="site" description="mRNA cap binding; via carbonyl oxygen" evidence="17">
    <location>
        <position position="2510"/>
    </location>
</feature>
<feature type="site" description="mRNA cap binding" evidence="17">
    <location>
        <position position="2511"/>
    </location>
</feature>
<feature type="site" description="mRNA cap binding; via carbonyl oxygen" evidence="17">
    <location>
        <position position="2513"/>
    </location>
</feature>
<feature type="site" description="mRNA cap binding" evidence="17">
    <location>
        <position position="2518"/>
    </location>
</feature>
<feature type="site" description="mRNA cap binding" evidence="17">
    <location>
        <position position="2522"/>
    </location>
</feature>
<feature type="site" description="Essential for 2'-O-methyltransferase activity" evidence="17">
    <location>
        <position position="2554"/>
    </location>
</feature>
<feature type="site" description="Essential for 2'-O-methyltransferase and N-7 methyltransferase activity" evidence="17">
    <location>
        <position position="2639"/>
    </location>
</feature>
<feature type="site" description="mRNA cap binding" evidence="17">
    <location>
        <position position="2643"/>
    </location>
</feature>
<feature type="site" description="Essential for 2'-O-methyltransferase activity" evidence="17">
    <location>
        <position position="2673"/>
    </location>
</feature>
<feature type="site" description="mRNA cap binding" evidence="17">
    <location>
        <position position="2704"/>
    </location>
</feature>
<feature type="site" description="mRNA cap binding" evidence="17">
    <location>
        <position position="2706"/>
    </location>
</feature>
<feature type="site" description="Essential for 2'-O-methyltransferase activity" evidence="17">
    <location>
        <position position="2709"/>
    </location>
</feature>
<feature type="modified residue" description="N6-acetyllysine; by host" evidence="7">
    <location>
        <position position="1864"/>
    </location>
</feature>
<feature type="modified residue" description="Phosphoserine" evidence="1">
    <location>
        <position position="2549"/>
    </location>
</feature>
<feature type="glycosylation site" description="N-linked (GlcNAc...) asparagine; by host" evidence="11">
    <location>
        <position position="183"/>
    </location>
</feature>
<feature type="glycosylation site" description="N-linked (GlcNAc...) asparagine; by host" evidence="11">
    <location>
        <position position="347"/>
    </location>
</feature>
<feature type="glycosylation site" description="N-linked (GlcNAc...) asparagine; by host" evidence="11">
    <location>
        <position position="433"/>
    </location>
</feature>
<feature type="glycosylation site" description="N-linked (GlcNAc...) asparagine; by host" evidence="11">
    <location>
        <position position="905"/>
    </location>
</feature>
<feature type="glycosylation site" description="N-linked (GlcNAc...) asparagine; by host" evidence="11">
    <location>
        <position position="982"/>
    </location>
</feature>
<feature type="glycosylation site" description="N-linked (GlcNAc...) asparagine; by host" evidence="11">
    <location>
        <position position="1190"/>
    </location>
</feature>
<feature type="glycosylation site" description="N-linked (GlcNAc...) asparagine; by host" evidence="11">
    <location>
        <position position="2303"/>
    </location>
</feature>
<feature type="glycosylation site" description="N-linked (GlcNAc...) asparagine; by host" evidence="11">
    <location>
        <position position="2307"/>
    </location>
</feature>
<feature type="glycosylation site" description="N-linked (GlcNAc...) asparagine; by host" evidence="11">
    <location>
        <position position="2459"/>
    </location>
</feature>
<feature type="disulfide bond" evidence="21">
    <location>
        <begin position="283"/>
        <end position="310"/>
    </location>
</feature>
<feature type="disulfide bond" evidence="21">
    <location>
        <begin position="340"/>
        <end position="401"/>
    </location>
</feature>
<feature type="disulfide bond" evidence="21">
    <location>
        <begin position="354"/>
        <end position="385"/>
    </location>
</feature>
<feature type="disulfide bond" evidence="21">
    <location>
        <begin position="372"/>
        <end position="396"/>
    </location>
</feature>
<feature type="disulfide bond" evidence="21">
    <location>
        <begin position="465"/>
        <end position="565"/>
    </location>
</feature>
<feature type="disulfide bond" evidence="21">
    <location>
        <begin position="582"/>
        <end position="613"/>
    </location>
</feature>
<feature type="disulfide bond" evidence="22">
    <location>
        <begin position="779"/>
        <end position="790"/>
    </location>
</feature>
<feature type="disulfide bond" evidence="22">
    <location>
        <begin position="830"/>
        <end position="918"/>
    </location>
</feature>
<feature type="disulfide bond" evidence="22">
    <location>
        <begin position="954"/>
        <end position="998"/>
    </location>
</feature>
<feature type="disulfide bond" evidence="22">
    <location>
        <begin position="1055"/>
        <end position="1104"/>
    </location>
</feature>
<feature type="disulfide bond" evidence="22">
    <location>
        <begin position="1066"/>
        <end position="1088"/>
    </location>
</feature>
<feature type="disulfide bond" evidence="22">
    <location>
        <begin position="1087"/>
        <end position="1091"/>
    </location>
</feature>
<feature type="sequence variant" description="In strain: Isolate Philippines/836-1/1984.">
    <original>HM</original>
    <variation>TL</variation>
    <location>
        <begin position="125"/>
        <end position="126"/>
    </location>
</feature>
<feature type="sequence variant" description="In strain: Isolate Philippines/836-1/1984.">
    <original>S</original>
    <variation>P</variation>
    <location>
        <position position="142"/>
    </location>
</feature>
<feature type="sequence variant" description="In strain: Isolate Philippines/836-1/1984.">
    <original>TET</original>
    <variation>AEA</variation>
    <location>
        <begin position="171"/>
        <end position="173"/>
    </location>
</feature>
<feature type="sequence variant" description="In strain: Isolate Philippines/836-1/1984.">
    <original>E</original>
    <variation>D</variation>
    <location>
        <position position="186"/>
    </location>
</feature>
<feature type="sequence variant" description="In strain: Isolate Philippines/836-1/1984.">
    <original>A</original>
    <variation>D</variation>
    <location>
        <position position="210"/>
    </location>
</feature>
<feature type="sequence variant" description="In strain: Isolate Philippines/836-1/1984.">
    <original>A</original>
    <variation>G</variation>
    <location>
        <position position="251"/>
    </location>
</feature>
<feature type="sequence variant" description="In strain: Isolate Philippines/836-1/1984.">
    <original>T</original>
    <variation>I</variation>
    <location>
        <position position="441"/>
    </location>
</feature>
<feature type="sequence variant" description="In strain: Isolate Philippines/836-1/1984.">
    <original>E</original>
    <variation>R</variation>
    <location>
        <position position="475"/>
    </location>
</feature>
<feature type="sequence variant" description="In strain: Isolate 45AZ5.">
    <original>E</original>
    <variation>K</variation>
    <location>
        <position position="482"/>
    </location>
</feature>
<feature type="sequence variant" description="In strain: Isolate 45AZ5.">
    <original>T</original>
    <variation>I</variation>
    <location>
        <position position="573"/>
    </location>
</feature>
<feature type="sequence variant" description="In strain: Isolate Philippines/836-1/1984.">
    <original>S</original>
    <variation>T</variation>
    <location>
        <position position="677"/>
    </location>
</feature>
<feature type="sequence variant" description="In strain: Isolate Philippines/836-1/1984.">
    <original>R</original>
    <variation>K</variation>
    <location>
        <position position="786"/>
    </location>
</feature>
<feature type="sequence variant" description="In strain: Isolate 45AZ5.">
    <original>RRNV</original>
    <variation>KRKL</variation>
    <location>
        <begin position="1689"/>
        <end position="1692"/>
    </location>
</feature>
<feature type="sequence variant" description="In strain: Isolate 45AZ5.">
    <original>A</original>
    <variation>V</variation>
    <location>
        <position position="2242"/>
    </location>
</feature>
<feature type="sequence variant" description="In strain: Isolate 45AZ5.">
    <original>F</original>
    <variation>L</variation>
    <location>
        <position position="2357"/>
    </location>
</feature>
<feature type="sequence variant" description="In strain: Isolate 45AZ5.">
    <original>P</original>
    <variation>T</variation>
    <location>
        <position position="2543"/>
    </location>
</feature>
<feature type="sequence variant" description="In strain: Isolate 45AZ5.">
    <original>G</original>
    <variation>E</variation>
    <location>
        <position position="2779"/>
    </location>
</feature>
<feature type="sequence variant" description="In strain: Isolate 45AZ5.">
    <original>R</original>
    <variation>Q</variation>
    <location>
        <position position="3337"/>
    </location>
</feature>
<feature type="mutagenesis site" description="Impaired virion assembly." evidence="46">
    <original>G</original>
    <variation>A</variation>
    <location>
        <position position="1138"/>
    </location>
</feature>
<feature type="mutagenesis site" description="Impaired virion assembly." evidence="46">
    <original>E</original>
    <variation>A</variation>
    <location>
        <position position="1147"/>
    </location>
</feature>
<feature type="mutagenesis site" description="Impaired virion assembly." evidence="46">
    <original>E</original>
    <variation>A</variation>
    <location>
        <position position="1227"/>
    </location>
</feature>
<feature type="mutagenesis site" description="Complete loss of viral RNA synthesis." evidence="46">
    <original>D</original>
    <variation>A</variation>
    <location>
        <position position="1252"/>
    </location>
</feature>
<feature type="mutagenesis site" description="Impaired virion assembly." evidence="46">
    <original>Q</original>
    <variation>A</variation>
    <location>
        <position position="1314"/>
    </location>
</feature>
<feature type="mutagenesis site" description="Impaired virion assembly." evidence="46">
    <original>K</original>
    <variation>A</variation>
    <location>
        <position position="1315"/>
    </location>
</feature>
<feature type="mutagenesis site" description="Complete loss of viral RNA synthesis." evidence="46">
    <original>G</original>
    <variation>A</variation>
    <location>
        <position position="1327"/>
    </location>
</feature>
<feature type="helix" evidence="67">
    <location>
        <begin position="288"/>
        <end position="290"/>
    </location>
</feature>
<feature type="strand" evidence="67">
    <location>
        <begin position="291"/>
        <end position="293"/>
    </location>
</feature>
<feature type="strand" evidence="67">
    <location>
        <begin position="295"/>
        <end position="308"/>
    </location>
</feature>
<feature type="strand" evidence="67">
    <location>
        <begin position="311"/>
        <end position="313"/>
    </location>
</feature>
<feature type="strand" evidence="67">
    <location>
        <begin position="321"/>
        <end position="332"/>
    </location>
</feature>
<feature type="strand" evidence="67">
    <location>
        <begin position="334"/>
        <end position="352"/>
    </location>
</feature>
<feature type="helix" evidence="67">
    <location>
        <begin position="363"/>
        <end position="366"/>
    </location>
</feature>
<feature type="strand" evidence="67">
    <location>
        <begin position="370"/>
        <end position="379"/>
    </location>
</feature>
<feature type="helix" evidence="67">
    <location>
        <begin position="381"/>
        <end position="383"/>
    </location>
</feature>
<feature type="strand" evidence="67">
    <location>
        <begin position="389"/>
        <end position="409"/>
    </location>
</feature>
<feature type="helix" evidence="67">
    <location>
        <begin position="412"/>
        <end position="414"/>
    </location>
</feature>
<feature type="strand" evidence="67">
    <location>
        <begin position="415"/>
        <end position="423"/>
    </location>
</feature>
<feature type="strand" evidence="67">
    <location>
        <begin position="440"/>
        <end position="444"/>
    </location>
</feature>
<feature type="strand" evidence="67">
    <location>
        <begin position="450"/>
        <end position="455"/>
    </location>
</feature>
<feature type="turn" evidence="67">
    <location>
        <begin position="456"/>
        <end position="458"/>
    </location>
</feature>
<feature type="strand" evidence="67">
    <location>
        <begin position="459"/>
        <end position="467"/>
    </location>
</feature>
<feature type="turn" evidence="67">
    <location>
        <begin position="473"/>
        <end position="475"/>
    </location>
</feature>
<feature type="strand" evidence="67">
    <location>
        <begin position="476"/>
        <end position="481"/>
    </location>
</feature>
<feature type="strand" evidence="67">
    <location>
        <begin position="484"/>
        <end position="489"/>
    </location>
</feature>
<feature type="helix" evidence="67">
    <location>
        <begin position="490"/>
        <end position="494"/>
    </location>
</feature>
<feature type="strand" evidence="67">
    <location>
        <begin position="500"/>
        <end position="504"/>
    </location>
</feature>
<feature type="helix" evidence="67">
    <location>
        <begin position="514"/>
        <end position="516"/>
    </location>
</feature>
<feature type="strand" evidence="67">
    <location>
        <begin position="518"/>
        <end position="520"/>
    </location>
</feature>
<feature type="strand" evidence="67">
    <location>
        <begin position="530"/>
        <end position="532"/>
    </location>
</feature>
<feature type="helix" evidence="67">
    <location>
        <begin position="537"/>
        <end position="543"/>
    </location>
</feature>
<feature type="turn" evidence="67">
    <location>
        <begin position="544"/>
        <end position="546"/>
    </location>
</feature>
<feature type="strand" evidence="67">
    <location>
        <begin position="547"/>
        <end position="553"/>
    </location>
</feature>
<feature type="strand" evidence="67">
    <location>
        <begin position="556"/>
        <end position="559"/>
    </location>
</feature>
<feature type="strand" evidence="67">
    <location>
        <begin position="562"/>
        <end position="571"/>
    </location>
</feature>
<feature type="strand" evidence="66">
    <location>
        <begin position="586"/>
        <end position="590"/>
    </location>
</feature>
<feature type="strand" evidence="68">
    <location>
        <begin position="596"/>
        <end position="598"/>
    </location>
</feature>
<feature type="strand" evidence="66">
    <location>
        <begin position="600"/>
        <end position="606"/>
    </location>
</feature>
<feature type="strand" evidence="66">
    <location>
        <begin position="612"/>
        <end position="614"/>
    </location>
</feature>
<feature type="strand" evidence="66">
    <location>
        <begin position="617"/>
        <end position="620"/>
    </location>
</feature>
<feature type="strand" evidence="66">
    <location>
        <begin position="633"/>
        <end position="635"/>
    </location>
</feature>
<feature type="strand" evidence="66">
    <location>
        <begin position="637"/>
        <end position="639"/>
    </location>
</feature>
<feature type="strand" evidence="66">
    <location>
        <begin position="645"/>
        <end position="649"/>
    </location>
</feature>
<feature type="strand" evidence="66">
    <location>
        <begin position="653"/>
        <end position="663"/>
    </location>
</feature>
<feature type="strand" evidence="66">
    <location>
        <begin position="667"/>
        <end position="673"/>
    </location>
</feature>
<feature type="turn" evidence="69">
    <location>
        <begin position="956"/>
        <end position="958"/>
    </location>
</feature>
<feature type="strand" evidence="69">
    <location>
        <begin position="960"/>
        <end position="964"/>
    </location>
</feature>
<feature type="strand" evidence="69">
    <location>
        <begin position="967"/>
        <end position="971"/>
    </location>
</feature>
<feature type="strand" evidence="69">
    <location>
        <begin position="973"/>
        <end position="994"/>
    </location>
</feature>
<feature type="helix" evidence="69">
    <location>
        <begin position="1002"/>
        <end position="1004"/>
    </location>
</feature>
<feature type="helix" evidence="69">
    <location>
        <begin position="1013"/>
        <end position="1015"/>
    </location>
</feature>
<feature type="helix" evidence="69">
    <location>
        <begin position="1020"/>
        <end position="1022"/>
    </location>
</feature>
<feature type="helix" evidence="69">
    <location>
        <begin position="1028"/>
        <end position="1030"/>
    </location>
</feature>
<feature type="helix" evidence="69">
    <location>
        <begin position="1043"/>
        <end position="1045"/>
    </location>
</feature>
<feature type="strand" evidence="69">
    <location>
        <begin position="1046"/>
        <end position="1053"/>
    </location>
</feature>
<feature type="strand" evidence="69">
    <location>
        <begin position="1059"/>
        <end position="1062"/>
    </location>
</feature>
<feature type="strand" evidence="69">
    <location>
        <begin position="1073"/>
        <end position="1076"/>
    </location>
</feature>
<feature type="strand" evidence="69">
    <location>
        <begin position="1085"/>
        <end position="1090"/>
    </location>
</feature>
<feature type="strand" evidence="69">
    <location>
        <begin position="1096"/>
        <end position="1099"/>
    </location>
</feature>
<feature type="strand" evidence="69">
    <location>
        <begin position="1104"/>
        <end position="1106"/>
    </location>
</feature>
<feature type="strand" evidence="69">
    <location>
        <begin position="1111"/>
        <end position="1114"/>
    </location>
</feature>
<feature type="strand" evidence="65">
    <location>
        <begin position="1396"/>
        <end position="1402"/>
    </location>
</feature>
<feature type="strand" evidence="65">
    <location>
        <begin position="1421"/>
        <end position="1423"/>
    </location>
</feature>
<feature type="strand" evidence="65">
    <location>
        <begin position="1429"/>
        <end position="1431"/>
    </location>
</feature>
<feature type="strand" evidence="65">
    <location>
        <begin position="1496"/>
        <end position="1504"/>
    </location>
</feature>
<feature type="strand" evidence="65">
    <location>
        <begin position="1507"/>
        <end position="1517"/>
    </location>
</feature>
<feature type="strand" evidence="65">
    <location>
        <begin position="1520"/>
        <end position="1523"/>
    </location>
</feature>
<feature type="helix" evidence="65">
    <location>
        <begin position="1525"/>
        <end position="1528"/>
    </location>
</feature>
<feature type="strand" evidence="65">
    <location>
        <begin position="1533"/>
        <end position="1535"/>
    </location>
</feature>
<feature type="strand" evidence="65">
    <location>
        <begin position="1538"/>
        <end position="1540"/>
    </location>
</feature>
<feature type="strand" evidence="65">
    <location>
        <begin position="1542"/>
        <end position="1546"/>
    </location>
</feature>
<feature type="turn" evidence="65">
    <location>
        <begin position="1547"/>
        <end position="1550"/>
    </location>
</feature>
<feature type="strand" evidence="65">
    <location>
        <begin position="1551"/>
        <end position="1557"/>
    </location>
</feature>
<feature type="strand" evidence="65">
    <location>
        <begin position="1570"/>
        <end position="1574"/>
    </location>
</feature>
<feature type="strand" evidence="65">
    <location>
        <begin position="1582"/>
        <end position="1586"/>
    </location>
</feature>
<feature type="strand" evidence="65">
    <location>
        <begin position="1589"/>
        <end position="1593"/>
    </location>
</feature>
<feature type="strand" evidence="65">
    <location>
        <begin position="1596"/>
        <end position="1601"/>
    </location>
</feature>
<feature type="strand" evidence="65">
    <location>
        <begin position="1613"/>
        <end position="1615"/>
    </location>
</feature>
<feature type="strand" evidence="65">
    <location>
        <begin position="1621"/>
        <end position="1625"/>
    </location>
</feature>
<feature type="strand" evidence="65">
    <location>
        <begin position="1628"/>
        <end position="1630"/>
    </location>
</feature>
<feature type="strand" evidence="65">
    <location>
        <begin position="1636"/>
        <end position="1639"/>
    </location>
</feature>
<sequence length="3392" mass="378702">MNNQRKKTGRPSFNMLKRARNRVSTVSQLAKRFSKGLLSGQGPMKLVMAFIAFLRFLAIPPTAGILARWGSFKKNGAIKVLRGFKKEISNMLNIMNRRKRSVTMLLMLLPTALAFHLTTRGGEPHMIVSKQERGKSLLFKTSAGVNMCTLIAMDLGELCEDTMTYKCPRITETEPDDVDCWCNATETWVTYGTCSQTGEHRRDKRSVALAPHVGLGLETRTETWMSSEGAWKQIQKVETWALRHPGFTVIALFLAHAIGTSITQKGIIFILLMLVTPSMAMRCVGIGNRDFVEGLSGATWVDVVLEHGSCVTTMAKDKPTLDIELLKTEVTNPAVLRKLCIEAKISNTTTDSRCPTQGEATLVEEQDTNFVCRRTFVDRGWGNGCGLFGKGSLITCAKFKCVTKLEGKIVQYENLKYSVIVTVHTGDQHQVGNETTEHGTTATITPQAPTSEIQLTDYGALTLDCSPRTGLDFNEMVLLTMEKKSWLVHKQWFLDLPLPWTSGASTSQETWNRQDLLVTFKTAHAKKQEVVVLGSQEGAMHTALTGATEIQTSGTTTIFAGHLKCRLKMDKLTLKGMSYVMCTGSFKLEKEVAETQHGTVLVQVKYEGTDAPCKIPFSSQDEKGVTQNGRLITANPIVTDKEKPVNIEAEPPFGESYIVVGAGEKALKLSWFKKGSSIGKMFEATARGARRMAILGDTAWDFGSIGGVFTSVGKLIHQIFGTAYGVLFSGVSWTMKIGIGILLTWLGLNSRSTSLSMTCIAVGMVTLYLGVMVQADSGCVINWKGRELKCGSGIFVTNEVHTWTEQYKFQADSPKRLSAAIGKAWEEGVCGIRSATRLENIMWKQISNELNHILLENDMKFTVVVGDVSGILAQGKKMIRPQPMEHKYSWKSWGKAKIIGADVQNTTFIIDGPNTPECPDNQRAWNIWEVEDYGFGIFTTNIWLKLRDSYTQVCDHRLMSAAIKDSKAVHADMGYWIESEKNETWKLARASFIEVKTCIWPKSHTLWSNGVLESEMIIPKIYGGPISQHNYRPGYFTQTAGPWHLGKLELDFDLCEGTTVVVDEHCGNRGPSLRTTTVTGKTIHEWCCRSCTLPPLRFKGEDGCWYGMEIRPVKEKEENLVKSMVSAGSGEVDSFSLGLLCISIMIEEVMRSRWSRKMLMTGTLAVFLLLTMGQLTWNDLIRLCIMVGANASDKMGMGTTYLALMATFRMRPMFAVGLLFRRLTSREVLLLTVGLSLVASVELPNSLEELGDGLAMGIMMLKLLTDFQSHQLWATLLSLTFVKTTFSLHYAWKTMAMILSIVSLFPLCLSTTSQKTTWLPVLLGSLGCKPLTMFLITENKIWGRKSWPLNEGIMAVGIVSILLSSLLKNDVPLAGPLIAGGMLIACYVISGSSADLSLEKAAEVSWEEEAEHSGASHNILVEVQDDGTMKIKDEERDDTLTILLKATLLAISGVYPMSIPATLFVWYFWQKKKQRSGVLWDTPSPPEVERAVLDDGIYRILQRGLLGRSQVGVGVFQEGVFHTMWHVTRGAVLMYQGKRLEPSWASVKKDLISYGGGWRFQGSWNAGEEVQVIAVEPGKNPKNVQTAPGTFKTPEGEVGAIALDFKPGTSGSPIVNREGKIVGLYGNGVVTTSGTYVSAIAQAKASQEGPLPEIEDEVFRKRNLTIMDLHPGSGKTRRYLPAIVREAIRRNVRTLVLAPTRVVASEMAEALKGMPIRYQTTAVKSEHTGKEIVDLMCHATFTMRLLSPVRVPNYNMIIMDEAHFTDPASIAARGYISTRVGMGEAAAIFMTATPPGSVEAFPQSNAVIQDEERDIPERSWNSGYDWITDFPGKTVWFVPSIKSGNDIANCLRKNGKRVVQLSRKTFDTEYQKTKNNDWDYVVTTDISEMGANFRADRVIDPRRCLKPVILKDGPERVILAGPMPVTVASAAQRRGRIGRNQNKEGDQYIYMGQPLNNDEDHAHWTEAKMLLDNINTPEGIIPALFEPEREKSAAIDGEYRLRGEARKTFVELMRRGDLPVWLSYKVASEGFQYSDRRWCFDGERNNQVLEENMDVEIWTKEGERKKLRPRWLDARTYSDPLALREFKEFAAGRRSVSGDLILEIGKLPQHLTQRAQNALDNLVMLHNSEQGGKAYRHAMEELPDTIETLMLLALIAVLTGGVTLFFLSGRGLGKTSIGLLCVIASSALLWMASVEPHWIAASIILEFFLMVLLIPEPDRQRTPQDNQLAYVVIGLLFMILTAAANEMGLLETTKKDLGIGHAAAENHHHAAMLDVDLHPASAWTLYAVATTIITPMMRHTIENTTANISLTAIANQAAILMGLDKGWPISKMDIGVPLLALGCYSQVNPLTLTAAVFMLVAHYAIIGPGLQAKATREAQKRTAAGIMKNPTVDGIVAIDLDPVVYDAKFEKQLGQIMLLILCTSQILLMRTTWALCESITLATGPLTTLWEGSPGKFWNTTIAVSMANIFRGSYLAGAGLAFSLMKSLGGGRRGTGAQGETLGEKWKRQLNQLSKSEFNTYKRSGIIEVDRSEAKEGLKRGEPTKHAVSRGTAKLRWFVERNLVKPEGKVIDLGCGRGGWSYYCAGLKKVTEVKGYTKGGPGHEEPIPMATYGWNLVKLYSGKDVFFTPPEKCDTLLCDIGESSPNPTIEEGRTLRVLKMVEPWLRGNQFCIKILNPYMPSVVETLEQMQRKHGGMLVRNPLSRNSTHEMYWVSCGTGNIVSAVNMTSRMLLNRFTMAHRKPTYERDVDLGAGTRHVAVEPEVANLDIIGQRIENIKNGHKSTWHYDEDNPYKTWAYHGSYEVKPSGSASSMVNGVVRLLTKPWDVIPMVTQIAMTDTTPFGQQRVFKEKVDTRTPKAKRGTAQIMEVTARWLWGFLSRNKKPRICTREEFTRKVRSNAAIGAVFVDENQWNSAKEAVEDERFWDLVHRERELHKQGKCATCVYNMMGKREKKLGEFGKAKGSRAIWYMWLGARFLEFEALGFMNEDHWFSRENSLSGVEGEGLHKLGYILRDISKIPGGNMYADDTAGWDTRITEDDLQNEAKITDIMEPEHALLATSIFKLTYQNKVVRVQRPAKNGTVMDVISRRDQRGSGQVGTYGLNTFTNMEAQLIRQMESEGIFSPSELETPNLAERVLDWLKKHGTERLKRMAISGDDCVVKPIDDRFATALTALNDMGKVRKDIPQWEPSKGWNDWQQVPFCSHHFHQLIMKDGREIVVPCRNQDELVGRARVSQGAGWSLRETACLGKSYAQMWQLMYFHRRDLRLAANAICSAVPVDWVPTSRTTWSIHAHHQWMTTEDMLSVWNRVWIEENPWMEDKTHVSSWEDVPYLGKREDRWCGSLIGLTARATWATNIQVAINQVRRLIGNENYLDFMTSMKRFKNESDPEGALW</sequence>
<accession>P17763</accession>
<accession>P27910</accession>
<accession>P89313</accession>
<accession>P89314</accession>